<comment type="function">
    <text evidence="6 7 11 15 16 20 21 23 27">Receptor with a dual specificity kinase activity acting on both serine/threonine- and tyrosine-containing substrates. Regulates, in response to brassinosteroid binding, a signaling cascade involved in plant development, including expression of light- and stress-regulated genes, promotion of cell elongation, normal leaf and chloroplast senescence, and flowering. Binds brassinolide (BL), and less effectively castasterone (CS), but not 2,3,22,23-O-tetramethylbrassinolide or ecdysone. May be involved in a feedback regulation of brassinosteroid biosynthesis. Phosphorylates BRI1-associated receptor kinase 1 (BAK1), Transthyretin-Like protein (TTL) and SERK1 on 'Ser-299' and 'Thr-462' in vitro (PubMed:15319482). May have a guanylyl cyclase activity (PubMed:10557222, PubMed:10938344, PubMed:17138891, PubMed:17520012, PubMed:18694562, PubMed:19124768). Phosphorylates BSK1, BSK2 and BSK3 in vitro (PubMed:18653891). Phosphorylates BSK1, BSK3, BSK5, BSK6, BSK8 and BSK11 in vitro (PubMed:23496207).</text>
</comment>
<comment type="catalytic activity">
    <reaction evidence="35">
        <text>L-seryl-[protein] + ATP = O-phospho-L-seryl-[protein] + ADP + H(+)</text>
        <dbReference type="Rhea" id="RHEA:17989"/>
        <dbReference type="Rhea" id="RHEA-COMP:9863"/>
        <dbReference type="Rhea" id="RHEA-COMP:11604"/>
        <dbReference type="ChEBI" id="CHEBI:15378"/>
        <dbReference type="ChEBI" id="CHEBI:29999"/>
        <dbReference type="ChEBI" id="CHEBI:30616"/>
        <dbReference type="ChEBI" id="CHEBI:83421"/>
        <dbReference type="ChEBI" id="CHEBI:456216"/>
        <dbReference type="EC" id="2.7.11.1"/>
    </reaction>
</comment>
<comment type="catalytic activity">
    <reaction evidence="35">
        <text>L-threonyl-[protein] + ATP = O-phospho-L-threonyl-[protein] + ADP + H(+)</text>
        <dbReference type="Rhea" id="RHEA:46608"/>
        <dbReference type="Rhea" id="RHEA-COMP:11060"/>
        <dbReference type="Rhea" id="RHEA-COMP:11605"/>
        <dbReference type="ChEBI" id="CHEBI:15378"/>
        <dbReference type="ChEBI" id="CHEBI:30013"/>
        <dbReference type="ChEBI" id="CHEBI:30616"/>
        <dbReference type="ChEBI" id="CHEBI:61977"/>
        <dbReference type="ChEBI" id="CHEBI:456216"/>
        <dbReference type="EC" id="2.7.11.1"/>
    </reaction>
</comment>
<comment type="catalytic activity">
    <reaction evidence="5">
        <text>L-tyrosyl-[protein] + ATP = O-phospho-L-tyrosyl-[protein] + ADP + H(+)</text>
        <dbReference type="Rhea" id="RHEA:10596"/>
        <dbReference type="Rhea" id="RHEA-COMP:10136"/>
        <dbReference type="Rhea" id="RHEA-COMP:20101"/>
        <dbReference type="ChEBI" id="CHEBI:15378"/>
        <dbReference type="ChEBI" id="CHEBI:30616"/>
        <dbReference type="ChEBI" id="CHEBI:46858"/>
        <dbReference type="ChEBI" id="CHEBI:61978"/>
        <dbReference type="ChEBI" id="CHEBI:456216"/>
        <dbReference type="EC" id="2.7.10.1"/>
    </reaction>
</comment>
<comment type="activity regulation">
    <text>Activated by Ser and Thr phosphorylation.</text>
</comment>
<comment type="subunit">
    <text evidence="9 10 11 12 13 14 18 20 21 26 27 28 29 31 32">Monomer or homodimer in the plasma membrane. Heterodimer with BAK1 in the endosomes. Interacts with SERK1 and TTL in a kinase-dependent manner (PubMed:15319482). Bind to SERK1 in a brassinolide-dependent manner (PubMed:23929946). Component of the SERK1 signaling complex, composed of KAPP, CDC48A, GRF6 or GRF7, SERK1, SERK2, SERK3/BAK1 and BRI1. Interacts with CDG1 (PubMed:21855796). No interactions with PSKR1 or CNGC17 (PubMed:26071421). Interacts with BIK1 (PubMed:23818580). Interacts with B'ALPHA, B'BETA, B'GAMMA and B'ETA (PubMed:26517938). Interacts with BSK1 and BSK3 (PubMed:18653891). Interacts with BSK5, BSK6 and BSK11 (PubMed:23496207).</text>
</comment>
<comment type="interaction">
    <interactant intactId="EBI-1797828">
        <id>O22476</id>
    </interactant>
    <interactant intactId="EBI-617138">
        <id>Q94F62</id>
        <label>BAK1</label>
    </interactant>
    <organismsDiffer>false</organismsDiffer>
    <experiments>9</experiments>
</comment>
<comment type="interaction">
    <interactant intactId="EBI-1797828">
        <id>O22476</id>
    </interactant>
    <interactant intactId="EBI-20653325">
        <id>O65440-2</id>
        <label>BAM3</label>
    </interactant>
    <organismsDiffer>false</organismsDiffer>
    <experiments>3</experiments>
</comment>
<comment type="interaction">
    <interactant intactId="EBI-1797828">
        <id>O22476</id>
    </interactant>
    <interactant intactId="EBI-1797828">
        <id>O22476</id>
        <label>BRI1</label>
    </interactant>
    <organismsDiffer>false</organismsDiffer>
    <experiments>4</experiments>
</comment>
<comment type="interaction">
    <interactant intactId="EBI-1797828">
        <id>O22476</id>
    </interactant>
    <interactant intactId="EBI-1797846">
        <id>Q944A7</id>
        <label>BSK1</label>
    </interactant>
    <organismsDiffer>false</organismsDiffer>
    <experiments>4</experiments>
</comment>
<comment type="interaction">
    <interactant intactId="EBI-1797828">
        <id>O22476</id>
    </interactant>
    <interactant intactId="EBI-1797930">
        <id>Q8W4L3</id>
        <label>BSK3</label>
    </interactant>
    <organismsDiffer>false</organismsDiffer>
    <experiments>2</experiments>
</comment>
<comment type="interaction">
    <interactant intactId="EBI-1797828">
        <id>O22476</id>
    </interactant>
    <interactant intactId="EBI-16895926">
        <id>Q6XAT2</id>
        <label>ERL2</label>
    </interactant>
    <organismsDiffer>false</organismsDiffer>
    <experiments>2</experiments>
</comment>
<comment type="interaction">
    <interactant intactId="EBI-1797828">
        <id>O22476</id>
    </interactant>
    <interactant intactId="EBI-20651739">
        <id>Q9ZVD4</id>
        <label>LRR-RLK</label>
    </interactant>
    <organismsDiffer>false</organismsDiffer>
    <experiments>2</experiments>
</comment>
<comment type="interaction">
    <interactant intactId="EBI-1797828">
        <id>O22476</id>
    </interactant>
    <interactant intactId="EBI-16940204">
        <id>Q9S7I6</id>
        <label>RPK2</label>
    </interactant>
    <organismsDiffer>false</organismsDiffer>
    <experiments>2</experiments>
</comment>
<comment type="interaction">
    <interactant intactId="EBI-1797828">
        <id>O22476</id>
    </interactant>
    <interactant intactId="EBI-1555537">
        <id>Q94AG2</id>
        <label>SERK1</label>
    </interactant>
    <organismsDiffer>false</organismsDiffer>
    <experiments>7</experiments>
</comment>
<comment type="interaction">
    <interactant intactId="EBI-1797828">
        <id>O22476</id>
    </interactant>
    <interactant intactId="EBI-17072125">
        <id>Q8RWZ1</id>
        <label>SUB</label>
    </interactant>
    <organismsDiffer>false</organismsDiffer>
    <experiments>2</experiments>
</comment>
<comment type="interaction">
    <interactant intactId="EBI-1797828">
        <id>O22476</id>
    </interactant>
    <interactant intactId="EBI-1803584">
        <id>Q9LVM5</id>
        <label>TTL</label>
    </interactant>
    <organismsDiffer>false</organismsDiffer>
    <experiments>3</experiments>
</comment>
<comment type="subcellular location">
    <subcellularLocation>
        <location evidence="31">Cell membrane</location>
        <topology evidence="35">Single-pass type I membrane protein</topology>
    </subcellularLocation>
    <subcellularLocation>
        <location>Endosome membrane</location>
        <topology>Single-pass type I membrane protein</topology>
    </subcellularLocation>
</comment>
<comment type="tissue specificity">
    <text evidence="7 33">Expressed ubiquitously.</text>
</comment>
<comment type="developmental stage">
    <text>Expressed constitutively in either dark- or light-grown seedlings.</text>
</comment>
<comment type="domain">
    <text evidence="16">Contains one leucine-zipper motif and two pairs of conservatively spaced Cys (Cys pair 1 and 2) involved in forming heterodimers.</text>
</comment>
<comment type="domain">
    <text evidence="24">A 70 amino acid island between the 21st and the 22th LRR is essential for the binding of brassinosteroids.</text>
</comment>
<comment type="domain">
    <text evidence="16">The JM domain (815-883) is a positive regulator of kinase activity and is required for Tyr phosphorylation.</text>
</comment>
<comment type="domain">
    <text evidence="16">A guanylyl cyclase domain (1021-1134) having an in vitro activity is included in the C-terminal kinase domain.</text>
</comment>
<comment type="PTM">
    <text evidence="8 9 10 13 21 22 23">Autophosphorylated on Tyr-831, Tyr-956 and maybe Tyr-1072. Phosphorylated on at least 12 sites, with a preference for Ser residues. Transphosphorylated on Ser-887 by SERK1 and on Ser-838, Thr-846, Ser-858 and Ser-1166 by BAK1. Phosphorylation on Ser-1166 enhances the kinase activity.</text>
</comment>
<comment type="PTM">
    <text evidence="17">Glycosylated.</text>
</comment>
<comment type="disruption phenotype">
    <text evidence="6">Dwarf phenotype and aberrant leaf shape.</text>
</comment>
<comment type="miscellaneous">
    <text>Binding of brassinosteroid induces intramolecular autophosphorylation of BRI1. Interaction with BAK1 activates both receptor kinases and the full activation of either receptor kinase requires transphosphorylation by their partners. Optimum in vitro phosphorylation of the substrate requires Arg or Lys residues at P-3, P-4, and P+5 (relative to the phosphorylated amino acid at P=0). Homodimerizes in the absence of ligand and binds brassinosteroid in the absence of its coreceptor BAK1.</text>
</comment>
<comment type="miscellaneous">
    <text evidence="36">The bri1-9 mutation produces a fully active protein with a subtle conformational change that is recognized for reglucosylation by UGGT, resulting in its endoplasmic reticulum retention via Glc(1)Man(9)GlcNAc(2)-calreticulin/calnexin interaction.</text>
</comment>
<comment type="similarity">
    <text evidence="4">Belongs to the protein kinase superfamily. Ser/Thr protein kinase family.</text>
</comment>
<evidence type="ECO:0000250" key="1">
    <source>
        <dbReference type="UniProtKB" id="C0LGT6"/>
    </source>
</evidence>
<evidence type="ECO:0000250" key="2">
    <source>
        <dbReference type="UniProtKB" id="Q9M0G7"/>
    </source>
</evidence>
<evidence type="ECO:0000255" key="3"/>
<evidence type="ECO:0000255" key="4">
    <source>
        <dbReference type="PROSITE-ProRule" id="PRU00159"/>
    </source>
</evidence>
<evidence type="ECO:0000255" key="5">
    <source>
        <dbReference type="PROSITE-ProRule" id="PRU10027"/>
    </source>
</evidence>
<evidence type="ECO:0000269" key="6">
    <source>
    </source>
</evidence>
<evidence type="ECO:0000269" key="7">
    <source>
    </source>
</evidence>
<evidence type="ECO:0000269" key="8">
    <source>
    </source>
</evidence>
<evidence type="ECO:0000269" key="9">
    <source>
    </source>
</evidence>
<evidence type="ECO:0000269" key="10">
    <source>
    </source>
</evidence>
<evidence type="ECO:0000269" key="11">
    <source>
    </source>
</evidence>
<evidence type="ECO:0000269" key="12">
    <source>
    </source>
</evidence>
<evidence type="ECO:0000269" key="13">
    <source>
    </source>
</evidence>
<evidence type="ECO:0000269" key="14">
    <source>
    </source>
</evidence>
<evidence type="ECO:0000269" key="15">
    <source>
    </source>
</evidence>
<evidence type="ECO:0000269" key="16">
    <source>
    </source>
</evidence>
<evidence type="ECO:0000269" key="17">
    <source>
    </source>
</evidence>
<evidence type="ECO:0000269" key="18">
    <source>
    </source>
</evidence>
<evidence type="ECO:0000269" key="19">
    <source>
    </source>
</evidence>
<evidence type="ECO:0000269" key="20">
    <source>
    </source>
</evidence>
<evidence type="ECO:0000269" key="21">
    <source>
    </source>
</evidence>
<evidence type="ECO:0000269" key="22">
    <source>
    </source>
</evidence>
<evidence type="ECO:0000269" key="23">
    <source>
    </source>
</evidence>
<evidence type="ECO:0000269" key="24">
    <source>
    </source>
</evidence>
<evidence type="ECO:0000269" key="25">
    <source>
    </source>
</evidence>
<evidence type="ECO:0000269" key="26">
    <source>
    </source>
</evidence>
<evidence type="ECO:0000269" key="27">
    <source>
    </source>
</evidence>
<evidence type="ECO:0000269" key="28">
    <source>
    </source>
</evidence>
<evidence type="ECO:0000269" key="29">
    <source>
    </source>
</evidence>
<evidence type="ECO:0000269" key="30">
    <source>
    </source>
</evidence>
<evidence type="ECO:0000269" key="31">
    <source>
    </source>
</evidence>
<evidence type="ECO:0000269" key="32">
    <source>
    </source>
</evidence>
<evidence type="ECO:0000269" key="33">
    <source>
    </source>
</evidence>
<evidence type="ECO:0000303" key="34">
    <source>
    </source>
</evidence>
<evidence type="ECO:0000305" key="35"/>
<evidence type="ECO:0000305" key="36">
    <source>
    </source>
</evidence>
<evidence type="ECO:0000312" key="37">
    <source>
        <dbReference type="Araport" id="AT4G39400"/>
    </source>
</evidence>
<evidence type="ECO:0000312" key="38">
    <source>
        <dbReference type="EMBL" id="CAB44675.1"/>
    </source>
</evidence>
<evidence type="ECO:0007744" key="39">
    <source>
        <dbReference type="PDB" id="4LSX"/>
    </source>
</evidence>
<evidence type="ECO:0007829" key="40">
    <source>
        <dbReference type="PDB" id="3RGX"/>
    </source>
</evidence>
<evidence type="ECO:0007829" key="41">
    <source>
        <dbReference type="PDB" id="3RGZ"/>
    </source>
</evidence>
<evidence type="ECO:0007829" key="42">
    <source>
        <dbReference type="PDB" id="3RIZ"/>
    </source>
</evidence>
<evidence type="ECO:0007829" key="43">
    <source>
        <dbReference type="PDB" id="4LSA"/>
    </source>
</evidence>
<evidence type="ECO:0007829" key="44">
    <source>
        <dbReference type="PDB" id="4OH4"/>
    </source>
</evidence>
<evidence type="ECO:0007829" key="45">
    <source>
        <dbReference type="PDB" id="5LPB"/>
    </source>
</evidence>
<evidence type="ECO:0007829" key="46">
    <source>
        <dbReference type="PDB" id="5LPY"/>
    </source>
</evidence>
<accession>O22476</accession>
<accession>C0LGS4</accession>
<proteinExistence type="evidence at protein level"/>
<reference key="1">
    <citation type="journal article" date="1997" name="Cell">
        <title>A putative leucine-rich repeat receptor kinase involved in brassinosteroid signal transduction.</title>
        <authorList>
            <person name="Li J."/>
            <person name="Chory J."/>
        </authorList>
    </citation>
    <scope>NUCLEOTIDE SEQUENCE [GENOMIC DNA]</scope>
    <scope>TISSUE SPECIFICITY</scope>
    <scope>MUTANTS BRI1-101; BRI1-104; BRI1-113 AND BRI1-115</scope>
    <scope>MUTAGENESIS OF GLY-611; ALA-1031; GLY-1048 AND GLU-1078</scope>
    <source>
        <strain>cv. Columbia</strain>
    </source>
</reference>
<reference key="2">
    <citation type="journal article" date="1999" name="Plant Physiol.">
        <title>Brassinosteroid-insensitive dwarf mutants of Arabidopsis accumulate brassinosteroids.</title>
        <authorList>
            <person name="Noguchi T."/>
            <person name="Fujioka S."/>
            <person name="Choe S."/>
            <person name="Takatsuto S."/>
            <person name="Yoshida S."/>
            <person name="Yuan H."/>
            <person name="Feldmann K.A."/>
            <person name="Tax F.E."/>
        </authorList>
    </citation>
    <scope>NUCLEOTIDE SEQUENCE [GENOMIC DNA]</scope>
    <scope>FUNCTION</scope>
    <scope>MUTANTS BRI1-5/DWF2-W41; BRI1-6/BRI1-119/DWF2-399; BRI1-7/DWF2-WM3-2; BRI1-8/DWF2-WM6-2 AND BRI1-9/DWF2-WMB19</scope>
    <scope>MUTAGENESIS OF CYS-69; GLY-613; GLY-644; SER-662 AND ARG-983</scope>
    <scope>DISRUPTION PHENOTYPE</scope>
    <source>
        <strain>cv. En-2</strain>
        <strain>cv. Wassilewskija-2</strain>
    </source>
</reference>
<reference key="3">
    <citation type="journal article" date="2000" name="Plant Physiol.">
        <title>BRASSINOSTEROID-INSENSITIVE-1 is a ubiquitously expressed leucine-rich repeat receptor serine/threonine kinase.</title>
        <authorList>
            <person name="Friedrichsen D.M."/>
            <person name="Joazeiro C.A.P."/>
            <person name="Li J."/>
            <person name="Hunter T."/>
            <person name="Chory J."/>
        </authorList>
    </citation>
    <scope>NUCLEOTIDE SEQUENCE [GENOMIC DNA]</scope>
    <scope>FUNCTION</scope>
    <scope>SUBCELLULAR LOCATION</scope>
    <scope>TISSUE SPECIFICITY</scope>
    <scope>MUTANTS BRI1-1; BRI1-108; BRI1-117 AND BRI1-102</scope>
    <scope>MUTAGENESIS OF THR-750; ALA-909; ARG-983 AND ASP-1139</scope>
    <source>
        <strain>cv. Columbia</strain>
    </source>
</reference>
<reference key="4">
    <citation type="journal article" date="2010" name="BMC Genomics">
        <title>Genome-wide cloning and sequence analysis of leucine-rich repeat receptor-like protein kinase genes in Arabidopsis thaliana.</title>
        <authorList>
            <person name="Gou X."/>
            <person name="He K."/>
            <person name="Yang H."/>
            <person name="Yuan T."/>
            <person name="Lin H."/>
            <person name="Clouse S.D."/>
            <person name="Li J."/>
        </authorList>
    </citation>
    <scope>NUCLEOTIDE SEQUENCE [MRNA]</scope>
    <source>
        <strain>cv. Columbia</strain>
    </source>
</reference>
<reference key="5">
    <citation type="journal article" date="1999" name="Nature">
        <title>Sequence and analysis of chromosome 4 of the plant Arabidopsis thaliana.</title>
        <authorList>
            <person name="Mayer K.F.X."/>
            <person name="Schueller C."/>
            <person name="Wambutt R."/>
            <person name="Murphy G."/>
            <person name="Volckaert G."/>
            <person name="Pohl T."/>
            <person name="Duesterhoeft A."/>
            <person name="Stiekema W."/>
            <person name="Entian K.-D."/>
            <person name="Terryn N."/>
            <person name="Harris B."/>
            <person name="Ansorge W."/>
            <person name="Brandt P."/>
            <person name="Grivell L.A."/>
            <person name="Rieger M."/>
            <person name="Weichselgartner M."/>
            <person name="de Simone V."/>
            <person name="Obermaier B."/>
            <person name="Mache R."/>
            <person name="Mueller M."/>
            <person name="Kreis M."/>
            <person name="Delseny M."/>
            <person name="Puigdomenech P."/>
            <person name="Watson M."/>
            <person name="Schmidtheini T."/>
            <person name="Reichert B."/>
            <person name="Portetelle D."/>
            <person name="Perez-Alonso M."/>
            <person name="Boutry M."/>
            <person name="Bancroft I."/>
            <person name="Vos P."/>
            <person name="Hoheisel J."/>
            <person name="Zimmermann W."/>
            <person name="Wedler H."/>
            <person name="Ridley P."/>
            <person name="Langham S.-A."/>
            <person name="McCullagh B."/>
            <person name="Bilham L."/>
            <person name="Robben J."/>
            <person name="van der Schueren J."/>
            <person name="Grymonprez B."/>
            <person name="Chuang Y.-J."/>
            <person name="Vandenbussche F."/>
            <person name="Braeken M."/>
            <person name="Weltjens I."/>
            <person name="Voet M."/>
            <person name="Bastiaens I."/>
            <person name="Aert R."/>
            <person name="Defoor E."/>
            <person name="Weitzenegger T."/>
            <person name="Bothe G."/>
            <person name="Ramsperger U."/>
            <person name="Hilbert H."/>
            <person name="Braun M."/>
            <person name="Holzer E."/>
            <person name="Brandt A."/>
            <person name="Peters S."/>
            <person name="van Staveren M."/>
            <person name="Dirkse W."/>
            <person name="Mooijman P."/>
            <person name="Klein Lankhorst R."/>
            <person name="Rose M."/>
            <person name="Hauf J."/>
            <person name="Koetter P."/>
            <person name="Berneiser S."/>
            <person name="Hempel S."/>
            <person name="Feldpausch M."/>
            <person name="Lamberth S."/>
            <person name="Van den Daele H."/>
            <person name="De Keyser A."/>
            <person name="Buysshaert C."/>
            <person name="Gielen J."/>
            <person name="Villarroel R."/>
            <person name="De Clercq R."/>
            <person name="van Montagu M."/>
            <person name="Rogers J."/>
            <person name="Cronin A."/>
            <person name="Quail M.A."/>
            <person name="Bray-Allen S."/>
            <person name="Clark L."/>
            <person name="Doggett J."/>
            <person name="Hall S."/>
            <person name="Kay M."/>
            <person name="Lennard N."/>
            <person name="McLay K."/>
            <person name="Mayes R."/>
            <person name="Pettett A."/>
            <person name="Rajandream M.A."/>
            <person name="Lyne M."/>
            <person name="Benes V."/>
            <person name="Rechmann S."/>
            <person name="Borkova D."/>
            <person name="Bloecker H."/>
            <person name="Scharfe M."/>
            <person name="Grimm M."/>
            <person name="Loehnert T.-H."/>
            <person name="Dose S."/>
            <person name="de Haan M."/>
            <person name="Maarse A.C."/>
            <person name="Schaefer M."/>
            <person name="Mueller-Auer S."/>
            <person name="Gabel C."/>
            <person name="Fuchs M."/>
            <person name="Fartmann B."/>
            <person name="Granderath K."/>
            <person name="Dauner D."/>
            <person name="Herzl A."/>
            <person name="Neumann S."/>
            <person name="Argiriou A."/>
            <person name="Vitale D."/>
            <person name="Liguori R."/>
            <person name="Piravandi E."/>
            <person name="Massenet O."/>
            <person name="Quigley F."/>
            <person name="Clabauld G."/>
            <person name="Muendlein A."/>
            <person name="Felber R."/>
            <person name="Schnabl S."/>
            <person name="Hiller R."/>
            <person name="Schmidt W."/>
            <person name="Lecharny A."/>
            <person name="Aubourg S."/>
            <person name="Chefdor F."/>
            <person name="Cooke R."/>
            <person name="Berger C."/>
            <person name="Monfort A."/>
            <person name="Casacuberta E."/>
            <person name="Gibbons T."/>
            <person name="Weber N."/>
            <person name="Vandenbol M."/>
            <person name="Bargues M."/>
            <person name="Terol J."/>
            <person name="Torres A."/>
            <person name="Perez-Perez A."/>
            <person name="Purnelle B."/>
            <person name="Bent E."/>
            <person name="Johnson S."/>
            <person name="Tacon D."/>
            <person name="Jesse T."/>
            <person name="Heijnen L."/>
            <person name="Schwarz S."/>
            <person name="Scholler P."/>
            <person name="Heber S."/>
            <person name="Francs P."/>
            <person name="Bielke C."/>
            <person name="Frishman D."/>
            <person name="Haase D."/>
            <person name="Lemcke K."/>
            <person name="Mewes H.-W."/>
            <person name="Stocker S."/>
            <person name="Zaccaria P."/>
            <person name="Bevan M."/>
            <person name="Wilson R.K."/>
            <person name="de la Bastide M."/>
            <person name="Habermann K."/>
            <person name="Parnell L."/>
            <person name="Dedhia N."/>
            <person name="Gnoj L."/>
            <person name="Schutz K."/>
            <person name="Huang E."/>
            <person name="Spiegel L."/>
            <person name="Sekhon M."/>
            <person name="Murray J."/>
            <person name="Sheet P."/>
            <person name="Cordes M."/>
            <person name="Abu-Threideh J."/>
            <person name="Stoneking T."/>
            <person name="Kalicki J."/>
            <person name="Graves T."/>
            <person name="Harmon G."/>
            <person name="Edwards J."/>
            <person name="Latreille P."/>
            <person name="Courtney L."/>
            <person name="Cloud J."/>
            <person name="Abbott A."/>
            <person name="Scott K."/>
            <person name="Johnson D."/>
            <person name="Minx P."/>
            <person name="Bentley D."/>
            <person name="Fulton B."/>
            <person name="Miller N."/>
            <person name="Greco T."/>
            <person name="Kemp K."/>
            <person name="Kramer J."/>
            <person name="Fulton L."/>
            <person name="Mardis E."/>
            <person name="Dante M."/>
            <person name="Pepin K."/>
            <person name="Hillier L.W."/>
            <person name="Nelson J."/>
            <person name="Spieth J."/>
            <person name="Ryan E."/>
            <person name="Andrews S."/>
            <person name="Geisel C."/>
            <person name="Layman D."/>
            <person name="Du H."/>
            <person name="Ali J."/>
            <person name="Berghoff A."/>
            <person name="Jones K."/>
            <person name="Drone K."/>
            <person name="Cotton M."/>
            <person name="Joshu C."/>
            <person name="Antonoiu B."/>
            <person name="Zidanic M."/>
            <person name="Strong C."/>
            <person name="Sun H."/>
            <person name="Lamar B."/>
            <person name="Yordan C."/>
            <person name="Ma P."/>
            <person name="Zhong J."/>
            <person name="Preston R."/>
            <person name="Vil D."/>
            <person name="Shekher M."/>
            <person name="Matero A."/>
            <person name="Shah R."/>
            <person name="Swaby I.K."/>
            <person name="O'Shaughnessy A."/>
            <person name="Rodriguez M."/>
            <person name="Hoffman J."/>
            <person name="Till S."/>
            <person name="Granat S."/>
            <person name="Shohdy N."/>
            <person name="Hasegawa A."/>
            <person name="Hameed A."/>
            <person name="Lodhi M."/>
            <person name="Johnson A."/>
            <person name="Chen E."/>
            <person name="Marra M.A."/>
            <person name="Martienssen R."/>
            <person name="McCombie W.R."/>
        </authorList>
    </citation>
    <scope>NUCLEOTIDE SEQUENCE [LARGE SCALE GENOMIC DNA]</scope>
    <source>
        <strain>cv. Columbia</strain>
    </source>
</reference>
<reference key="6">
    <citation type="journal article" date="2017" name="Plant J.">
        <title>Araport11: a complete reannotation of the Arabidopsis thaliana reference genome.</title>
        <authorList>
            <person name="Cheng C.Y."/>
            <person name="Krishnakumar V."/>
            <person name="Chan A.P."/>
            <person name="Thibaud-Nissen F."/>
            <person name="Schobel S."/>
            <person name="Town C.D."/>
        </authorList>
    </citation>
    <scope>GENOME REANNOTATION</scope>
    <source>
        <strain>cv. Columbia</strain>
    </source>
</reference>
<reference key="7">
    <citation type="journal article" date="2000" name="Plant Physiol.">
        <title>Recombinant BRASSINOSTEROID INSENSITIVE 1 receptor-like kinase autophosphorylates on serine and threonine residues and phosphorylates a conserved peptide motif in vitro.</title>
        <authorList>
            <person name="Oh M.-H."/>
            <person name="Ray W.K."/>
            <person name="Huber S.C."/>
            <person name="Asara J.M."/>
            <person name="Gage D.A."/>
            <person name="Clouse S.D."/>
        </authorList>
    </citation>
    <scope>PHOSPHORYLATION AT SER-838; THR-842; THR-846; SER-858 AND THR-872</scope>
    <scope>MUTAGENESIS OF LYS-911</scope>
</reference>
<reference key="8">
    <citation type="journal article" date="2000" name="Science">
        <title>Perception of brassinosteroids by the extracellular domain of the receptor kinase BRI1.</title>
        <authorList>
            <person name="He Z."/>
            <person name="Wang Z.-Y."/>
            <person name="Li J."/>
            <person name="Zhu Q."/>
            <person name="Lamb C."/>
            <person name="Ronald P."/>
            <person name="Chory J."/>
        </authorList>
    </citation>
    <scope>STEROID-BINDING</scope>
</reference>
<reference key="9">
    <citation type="journal article" date="2001" name="Nature">
        <title>BRI1 is a critical component of a plasma-membrane receptor for plant steroids.</title>
        <authorList>
            <person name="Wang Z.-Y."/>
            <person name="Seto H."/>
            <person name="Fujioka S."/>
            <person name="Yoshida S."/>
            <person name="Chory J."/>
        </authorList>
    </citation>
    <scope>SUBCELLULAR LOCATION</scope>
    <scope>STEROID-BINDING</scope>
    <scope>AUTOPHOSPHORYLATION</scope>
</reference>
<reference key="10">
    <citation type="journal article" date="2002" name="Cell">
        <title>BRI1/BAK1, a receptor kinase pair mediating brassinosteroid signaling.</title>
        <authorList>
            <person name="Nam K.H."/>
            <person name="Li J."/>
        </authorList>
    </citation>
    <scope>SUBCELLULAR LOCATION</scope>
    <scope>PHOSPHORYLATION</scope>
    <scope>INTERACTION WITH BAK1</scope>
</reference>
<reference key="11">
    <citation type="journal article" date="2002" name="Cell">
        <title>BAK1, an Arabidopsis LRR receptor-like protein kinase, interacts with BRI1 and modulates brassinosteroid signaling.</title>
        <authorList>
            <person name="Li J."/>
            <person name="Wen J."/>
            <person name="Lease K.A."/>
            <person name="Doke J.T."/>
            <person name="Tax F.E."/>
            <person name="Walker J.C."/>
        </authorList>
    </citation>
    <scope>PHOSPHORYLATION</scope>
    <scope>INTERACTION WITH BAK1</scope>
</reference>
<reference key="12">
    <citation type="journal article" date="2004" name="Plant Cell">
        <title>Heterodimerization and endocytosis of Arabidopsis brassinosteroid receptors BRI1 and AtSERK3 (BAK1).</title>
        <authorList>
            <person name="Russinova E."/>
            <person name="Borst J.-W."/>
            <person name="Kwaaitaal M."/>
            <person name="Cano-Delgado A."/>
            <person name="Yin Y."/>
            <person name="Chory J."/>
            <person name="de Vries S.C."/>
        </authorList>
    </citation>
    <scope>SUBCELLULAR LOCATION</scope>
    <scope>INTERACTION WITH BAK1</scope>
</reference>
<reference key="13">
    <citation type="journal article" date="2004" name="Plant Cell">
        <title>The Arabidopsis transthyretin-like protein is a potential substrate of BRASSINOSTEROID-INSENSITIVE 1.</title>
        <authorList>
            <person name="Nam K.H."/>
            <person name="Li J."/>
        </authorList>
    </citation>
    <scope>FUNCTION</scope>
    <scope>MUTAGENESIS OF ALA-1031; GLY-1048 AND GLU-1078</scope>
    <scope>INTERACTION WITH TTL</scope>
    <source>
        <strain>cv. Columbia</strain>
    </source>
</reference>
<reference key="14">
    <citation type="journal article" date="2005" name="Plant Cell">
        <title>Identification and functional analysis of in vivo phosphorylation sites of the Arabidopsis BRASSINOSTEROID-INSENSITIVE1 receptor kinase.</title>
        <authorList>
            <person name="Wang X."/>
            <person name="Goshe M.B."/>
            <person name="Soderblom E.J."/>
            <person name="Phinney B.S."/>
            <person name="Kuchar J.A."/>
            <person name="Li J."/>
            <person name="Asami T."/>
            <person name="Yoshida S."/>
            <person name="Huber S.C."/>
            <person name="Clouse S.D."/>
        </authorList>
    </citation>
    <scope>PHOSPHORYLATION AT SER-838; SER-858; THR-872; THR-880; THR-982 AND SER-1168</scope>
    <scope>INTERACTION WITH BAK1</scope>
    <scope>MUTAGENESIS OF SER-838; THR-842; THR-846; SER-858; THR-872; THR-1039; SER-1042; SER-1044; THR-1045; THR-1049; SER-1168; SER-1172; 1179-SER-THR-1180 AND SER-1187</scope>
</reference>
<reference key="15">
    <citation type="journal article" date="2006" name="Plant Cell">
        <title>The Arabidopsis SOMATIC EMBRYOGENESIS RECEPTOR-LIKE KINASE1 protein complex includes BRASSINOSTEROID-INSENSITIVE1.</title>
        <authorList>
            <person name="Karlova R."/>
            <person name="Boeren S."/>
            <person name="Russinova E."/>
            <person name="Aker J."/>
            <person name="Vervoort J."/>
            <person name="de Vries S.C."/>
        </authorList>
    </citation>
    <scope>INTERACTION WITH SERK1</scope>
</reference>
<reference key="16">
    <citation type="journal article" date="2006" name="Science">
        <title>Brassinosteroid signaling: a paradigm for steroid hormone signaling from the cell surface.</title>
        <authorList>
            <person name="Belkhadir Y."/>
            <person name="Chory J."/>
        </authorList>
    </citation>
    <scope>FUNCTION</scope>
</reference>
<reference key="17">
    <citation type="journal article" date="2007" name="Genes Dev.">
        <title>Endosomal signaling of plant steroid receptor kinase BRI1.</title>
        <authorList>
            <person name="Geldner N."/>
            <person name="Hyman D.L."/>
            <person name="Wang X."/>
            <person name="Schumacher K."/>
            <person name="Chory J."/>
        </authorList>
    </citation>
    <scope>SUBCELLULAR LOCATION</scope>
</reference>
<reference key="18">
    <citation type="journal article" date="2007" name="Mol. Cell">
        <title>Allele-specific suppression of a defective brassinosteroid receptor reveals a physiological role of UGGT in ER quality control.</title>
        <authorList>
            <person name="Jin H."/>
            <person name="Yan Z."/>
            <person name="Nam K.H."/>
            <person name="Li J."/>
        </authorList>
    </citation>
    <scope>GLYCOSYLATION</scope>
    <scope>SUBCELLULAR LOCATION</scope>
</reference>
<reference key="19">
    <citation type="journal article" date="2007" name="PLoS ONE">
        <title>The Arabidopsis thaliana brassinosteroid receptor (AtBRI1) contains a domain that functions as a guanylyl cyclase in vitro.</title>
        <authorList>
            <person name="Kwezi L."/>
            <person name="Meier S."/>
            <person name="Mungur L."/>
            <person name="Ruzvidzo O."/>
            <person name="Irving H."/>
            <person name="Gehring C."/>
        </authorList>
    </citation>
    <scope>FUNCTION</scope>
    <scope>DOMAIN</scope>
</reference>
<reference key="20">
    <citation type="journal article" date="2008" name="Biophys. J.">
        <title>Fluorescence fluctuation analysis of Arabidopsis thaliana somatic embryogenesis receptor-like kinase and brassinosteroid insensitive 1 receptor oligomerization.</title>
        <authorList>
            <person name="Hink M.A."/>
            <person name="Shah K."/>
            <person name="Russinova E."/>
            <person name="de Vries S.C."/>
            <person name="Visser A.J."/>
        </authorList>
    </citation>
    <scope>SUBUNIT</scope>
</reference>
<reference key="21">
    <citation type="journal article" date="2008" name="Cell Res.">
        <title>Is kinase activity essential for biological functions of BRI1?</title>
        <authorList>
            <person name="Xu W."/>
            <person name="Huang J."/>
            <person name="Li B."/>
            <person name="Li J."/>
            <person name="Wang Y."/>
        </authorList>
    </citation>
    <scope>MUTAGENESIS OF GLY-989</scope>
</reference>
<reference key="22">
    <citation type="journal article" date="2008" name="Dev. Cell">
        <title>Sequential transphosphorylation of the BRI1/BAK1 receptor kinase complex impacts early events in brassinosteroid signaling.</title>
        <authorList>
            <person name="Wang X."/>
            <person name="Kota U."/>
            <person name="He K."/>
            <person name="Blackburn K."/>
            <person name="Li J."/>
            <person name="Goshe M.B."/>
            <person name="Huber S.C."/>
            <person name="Clouse S.D."/>
        </authorList>
    </citation>
    <scope>FUNCTION</scope>
    <scope>PHOSPHORYLATION AT SER-838; THR-846; SER-858; SER-1166 AND THR-1180</scope>
    <scope>INTERACTION WITH BAK1</scope>
    <scope>MUTAGENESIS OF SER-838; THR-842; THR-846; SER-858; THR-1049; SER-1166; SER-1168; SER-1172; SER-1179 AND THR-1180</scope>
</reference>
<reference key="23">
    <citation type="journal article" date="2008" name="Science">
        <title>BSKs mediate signal transduction from the receptor kinase BRI1 in Arabidopsis.</title>
        <authorList>
            <person name="Tang W."/>
            <person name="Kim T.W."/>
            <person name="Oses-Prieto J.A."/>
            <person name="Sun Y."/>
            <person name="Deng Z."/>
            <person name="Zhu S."/>
            <person name="Wang R."/>
            <person name="Burlingame A.L."/>
            <person name="Wang Z.Y."/>
        </authorList>
    </citation>
    <scope>FUNCTION</scope>
    <scope>INTERACTION WITH BSK1 AND BSK3</scope>
</reference>
<reference key="24">
    <citation type="journal article" date="2009" name="Proteomics">
        <title>Identification of in vitro phosphorylation sites in the Arabidopsis thaliana somatic embryogenesis receptor-like kinases.</title>
        <authorList>
            <person name="Karlova R."/>
            <person name="Boeren S."/>
            <person name="van Dongen W."/>
            <person name="Kwaaitaal M."/>
            <person name="Aker J."/>
            <person name="Vervoort J."/>
            <person name="de Vries S.C."/>
        </authorList>
    </citation>
    <scope>PHOSPHORYLATION AT SER-887</scope>
    <scope>PHOSPHORYLATION OF SERK1</scope>
</reference>
<reference key="25">
    <citation type="journal article" date="2009" name="Proc. Natl. Acad. Sci. U.S.A.">
        <title>Tyrosine phosphorylation of the BRI1 receptor kinase emerges as a component of brassinosteroid signaling in Arabidopsis.</title>
        <authorList>
            <person name="Oh M.-H."/>
            <person name="Wang X."/>
            <person name="Kota U."/>
            <person name="Goshe M.B."/>
            <person name="Clouse S.D."/>
            <person name="Huber S.C."/>
        </authorList>
    </citation>
    <scope>FUNCTION</scope>
    <scope>MUTAGENESIS OF TYR-831; TYR-898; TYR-945; TYR-956; TYR-961; TYR-1052; TYR-1057; TYR-1058; TYR-1070 AND TYR-1072</scope>
    <scope>AUTOPHOSPHORYLATION</scope>
    <scope>PHOSPHORYLATION AT TYR-831 AND TYR-956</scope>
</reference>
<reference key="26">
    <citation type="journal article" date="2011" name="Mol. Cell">
        <title>The CDG1 kinase mediates brassinosteroid signal transduction from BRI1 receptor kinase to BSU1 phosphatase and GSK3-like kinase BIN2.</title>
        <authorList>
            <person name="Kim T.W."/>
            <person name="Guan S."/>
            <person name="Burlingame A.L."/>
            <person name="Wang Z.Y."/>
        </authorList>
    </citation>
    <scope>INTERACTION WITH CDG1</scope>
</reference>
<reference key="27">
    <citation type="journal article" date="2013" name="Plant J.">
        <title>BSKs are partially redundant positive regulators of brassinosteroid signaling in Arabidopsis.</title>
        <authorList>
            <person name="Sreeramulu S."/>
            <person name="Mostizky Y."/>
            <person name="Sunitha S."/>
            <person name="Shani E."/>
            <person name="Nahum H."/>
            <person name="Salomon D."/>
            <person name="Hayun L.B."/>
            <person name="Gruetter C."/>
            <person name="Rauh D."/>
            <person name="Ori N."/>
            <person name="Sessa G."/>
        </authorList>
    </citation>
    <scope>FUNCTION</scope>
    <scope>INTERACTION WITH BSK5; BSK6 AND BSK11</scope>
</reference>
<reference key="28">
    <citation type="journal article" date="2013" name="Proc. Natl. Acad. Sci. U.S.A.">
        <title>Inverse modulation of plant immune and brassinosteroid signaling pathways by the receptor-like cytoplasmic kinase BIK1.</title>
        <authorList>
            <person name="Lin W."/>
            <person name="Lu D."/>
            <person name="Gao X."/>
            <person name="Jiang S."/>
            <person name="Ma X."/>
            <person name="Wang Z."/>
            <person name="Mengiste T."/>
            <person name="He P."/>
            <person name="Shan L."/>
        </authorList>
    </citation>
    <scope>INTERACTION WITH BIK1</scope>
</reference>
<reference key="29">
    <citation type="journal article" date="2015" name="Plant Cell">
        <title>Phytosulfokine regulates growth in Arabidopsis through a response module at the plasma membrane that includes CYCLIC NUCLEOTIDE-GATED CHANNEL17, H+-ATPase, and BAK1.</title>
        <authorList>
            <person name="Ladwig F."/>
            <person name="Dahlke R.I."/>
            <person name="Stuehrwohldt N."/>
            <person name="Hartmann J."/>
            <person name="Harter K."/>
            <person name="Sauter M."/>
        </authorList>
    </citation>
    <scope>LACK OF INTERACTION WITH CNGC17 AND PSKR1</scope>
    <scope>SUBCELLULAR LOCATION</scope>
</reference>
<reference key="30">
    <citation type="journal article" date="2016" name="Mol. Plant">
        <title>The brassinosteroid-activated BRI1 receptor kinase is switched off by dephosphorylation mediated by cytoplasm-localized PP2A B' subunits.</title>
        <authorList>
            <person name="Wang R."/>
            <person name="Liu M."/>
            <person name="Yuan M."/>
            <person name="Oses-Prieto J.A."/>
            <person name="Cai X."/>
            <person name="Sun Y."/>
            <person name="Burlingame A.L."/>
            <person name="Wang Z.Y."/>
            <person name="Tang W."/>
        </authorList>
    </citation>
    <scope>INTERACTION WITH B'ALPHA; B'BETA; B'GAMMA AND B'ETA</scope>
</reference>
<reference key="31">
    <citation type="journal article" date="2011" name="Nature">
        <title>Structural basis of steroid hormone perception by the receptor kinase BRI1.</title>
        <authorList>
            <person name="Hothorn M."/>
            <person name="Belkhadir Y."/>
            <person name="Dreux M."/>
            <person name="Dabi T."/>
            <person name="Noel J.P."/>
            <person name="Wilson I.A."/>
            <person name="Chory J."/>
        </authorList>
    </citation>
    <scope>X-RAY CRYSTALLOGRAPHY (2.52 ANGSTROMS) OF 29-788 IN COMPLEX WITH BRASSINOLIDE</scope>
    <scope>GLYCOSYLATION AT ASN-112; ASN-154; ASN-233; ASN-275; ASN-351 AND ASN-545</scope>
</reference>
<reference key="32">
    <citation type="journal article" date="2011" name="Nature">
        <title>Structural insight into brassinosteroid perception by BRI1.</title>
        <authorList>
            <person name="She J."/>
            <person name="Han Z."/>
            <person name="Kim T.W."/>
            <person name="Wang J."/>
            <person name="Cheng W."/>
            <person name="Chang J."/>
            <person name="Shi S."/>
            <person name="Wang J."/>
            <person name="Yang M."/>
            <person name="Wang Z.Y."/>
            <person name="Chai J."/>
        </authorList>
    </citation>
    <scope>X-RAY CRYSTALLOGRAPHY (2.28 ANGSTROMS) OF 23-784 IN COMPLEX WITH BRASSINOLIDE</scope>
    <scope>GLYCOSYLATION AT ASN-112; ASN-154; ASN-233; ASN-275; ASN-351; ASN-510; ASN-545 AND ASN-573</scope>
</reference>
<reference key="33">
    <citation type="journal article" date="2013" name="Science">
        <title>Molecular mechanism for plant steroid receptor activation by somatic embryogenesis co-receptor kinases.</title>
        <authorList>
            <person name="Santiago J."/>
            <person name="Henzler C."/>
            <person name="Hothorn M."/>
        </authorList>
    </citation>
    <scope>X-RAY CRYSTALLOGRAPHY (2.50 ANGSTROMS) OF 29-788 IN COMPLEX WITH BRASSINOLIDE AND SERK1</scope>
    <scope>INTERACTION WITH SERK1</scope>
    <scope>GLYCOSYLATION AT ASN-112; ASN-154; ASN-233; ASN-275; ASN-351; ASN-545 AND ASN-573</scope>
</reference>
<reference key="34">
    <citation type="journal article" date="2014" name="Plant J.">
        <title>Crystal structures of the phosphorylated BRI1 kinase domain and implications for brassinosteroid signal initiation.</title>
        <authorList>
            <person name="Bojar D."/>
            <person name="Martinez J."/>
            <person name="Santiago J."/>
            <person name="Rybin V."/>
            <person name="Bayliss R."/>
            <person name="Hothorn M."/>
        </authorList>
    </citation>
    <scope>X-RAY CRYSTALLOGRAPHY (1.98 ANGSTROMS) OF 865-1160 IN COMPLEX WITH ATP</scope>
    <scope>GLYCOSYLATION AT ASN-154; ASN-275 AND ASN-545</scope>
</reference>
<gene>
    <name evidence="34" type="primary">BRI1</name>
    <name evidence="37" type="ordered locus">At4g39400</name>
    <name evidence="38" type="ORF">F23K16.30</name>
</gene>
<protein>
    <recommendedName>
        <fullName evidence="34">Protein BRASSINOSTEROID INSENSITIVE 1</fullName>
        <shortName evidence="34">AtBRI1</shortName>
        <ecNumber evidence="35">2.7.10.1</ecNumber>
        <ecNumber evidence="35">2.7.11.1</ecNumber>
    </recommendedName>
    <alternativeName>
        <fullName evidence="34">Brassinosteroid LRR receptor kinase</fullName>
    </alternativeName>
</protein>
<sequence length="1196" mass="130543">MKTFSSFFLSVTTLFFFSFFSLSFQASPSQSLYREIHQLISFKDVLPDKNLLPDWSSNKNPCTFDGVTCRDDKVTSIDLSSKPLNVGFSAVSSSLLSLTGLESLFLSNSHINGSVSGFKCSASLTSLDLSRNSLSGPVTTLTSLGSCSGLKFLNVSSNTLDFPGKVSGGLKLNSLEVLDLSANSISGANVVGWVLSDGCGELKHLAISGNKISGDVDVSRCVNLEFLDVSSNNFSTGIPFLGDCSALQHLDISGNKLSGDFSRAISTCTELKLLNISSNQFVGPIPPLPLKSLQYLSLAENKFTGEIPDFLSGACDTLTGLDLSGNHFYGAVPPFFGSCSLLESLALSSNNFSGELPMDTLLKMRGLKVLDLSFNEFSGELPESLTNLSASLLTLDLSSNNFSGPILPNLCQNPKNTLQELYLQNNGFTGKIPPTLSNCSELVSLHLSFNYLSGTIPSSLGSLSKLRDLKLWLNMLEGEIPQELMYVKTLETLILDFNDLTGEIPSGLSNCTNLNWISLSNNRLTGEIPKWIGRLENLAILKLSNNSFSGNIPAELGDCRSLIWLDLNTNLFNGTIPAAMFKQSGKIAANFIAGKRYVYIKNDGMKKECHGAGNLLEFQGIRSEQLNRLSTRNPCNITSRVYGGHTSPTFDNNGSMMFLDMSYNMLSGYIPKEIGSMPYLFILNLGHNDISGSIPDEVGDLRGLNILDLSSNKLDGRIPQAMSALTMLTEIDLSNNNLSGPIPEMGQFETFPPAKFLNNPGLCGYPLPRCDPSNADGYAHHQRSHGRRPASLAGSVAMGLLFSFVCIFGLILVGREMRKRRRKKEAELEMYAEGHGNSGDRTANNTNWKLTGVKEALSINLAAFEKPLRKLTFADLLQATNGFHNDSLIGSGGFGDVYKAILKDGSAVAIKKLIHVSGQGDREFMAEMETIGKIKHRNLVPLLGYCKVGDERLLVYEFMKYGSLEDVLHDPKKAGVKLNWSTRRKIAIGSARGLAFLHHNCSPHIIHRDMKSSNVLLDENLEARVSDFGMARLMSAMDTHLSVSTLAGTPGYVPPEYYQSFRCSTKGDVYSYGVVLLELLTGKRPTDSPDFGDNNLVGWVKQHAKLRISDVFDPELMKEDPALEIELLQHLKVAVACLDDRAWRRPTMVQVMAMFKEIQAGSGIDSQSTIRSIEDGGFSTIEMVDMSIKEVPEGKL</sequence>
<feature type="signal peptide" evidence="3">
    <location>
        <begin position="1"/>
        <end position="23"/>
    </location>
</feature>
<feature type="chain" id="PRO_0000024305" description="Protein BRASSINOSTEROID INSENSITIVE 1">
    <location>
        <begin position="24"/>
        <end position="1196"/>
    </location>
</feature>
<feature type="transmembrane region" description="Helical" evidence="3">
    <location>
        <begin position="793"/>
        <end position="813"/>
    </location>
</feature>
<feature type="repeat" description="LRR 1" evidence="3">
    <location>
        <begin position="71"/>
        <end position="98"/>
    </location>
</feature>
<feature type="repeat" description="LRR 2" evidence="3">
    <location>
        <begin position="99"/>
        <end position="121"/>
    </location>
</feature>
<feature type="repeat" description="LRR 3" evidence="3">
    <location>
        <begin position="122"/>
        <end position="146"/>
    </location>
</feature>
<feature type="repeat" description="LRR 4" evidence="3">
    <location>
        <begin position="148"/>
        <end position="169"/>
    </location>
</feature>
<feature type="repeat" description="LRR 5" evidence="3">
    <location>
        <begin position="172"/>
        <end position="197"/>
    </location>
</feature>
<feature type="repeat" description="LRR 6" evidence="3">
    <location>
        <begin position="199"/>
        <end position="221"/>
    </location>
</feature>
<feature type="repeat" description="LRR 7" evidence="3">
    <location>
        <begin position="222"/>
        <end position="244"/>
    </location>
</feature>
<feature type="repeat" description="LRR 8" evidence="3">
    <location>
        <begin position="245"/>
        <end position="268"/>
    </location>
</feature>
<feature type="repeat" description="LRR 9" evidence="3">
    <location>
        <begin position="269"/>
        <end position="290"/>
    </location>
</feature>
<feature type="repeat" description="LRR 10" evidence="3">
    <location>
        <begin position="291"/>
        <end position="314"/>
    </location>
</feature>
<feature type="repeat" description="LRR 11" evidence="3">
    <location>
        <begin position="316"/>
        <end position="338"/>
    </location>
</feature>
<feature type="repeat" description="LRR 12" evidence="3">
    <location>
        <begin position="339"/>
        <end position="363"/>
    </location>
</feature>
<feature type="repeat" description="LRR 13" evidence="3">
    <location>
        <begin position="364"/>
        <end position="388"/>
    </location>
</feature>
<feature type="repeat" description="LRR 14" evidence="3">
    <location>
        <begin position="390"/>
        <end position="413"/>
    </location>
</feature>
<feature type="repeat" description="LRR 15" evidence="3">
    <location>
        <begin position="415"/>
        <end position="439"/>
    </location>
</feature>
<feature type="repeat" description="LRR 16" evidence="3">
    <location>
        <begin position="441"/>
        <end position="463"/>
    </location>
</feature>
<feature type="repeat" description="LRR 17" evidence="3">
    <location>
        <begin position="464"/>
        <end position="487"/>
    </location>
</feature>
<feature type="repeat" description="LRR 18" evidence="3">
    <location>
        <begin position="488"/>
        <end position="511"/>
    </location>
</feature>
<feature type="repeat" description="LRR 19" evidence="3">
    <location>
        <begin position="513"/>
        <end position="535"/>
    </location>
</feature>
<feature type="repeat" description="LRR 20" evidence="3">
    <location>
        <begin position="536"/>
        <end position="559"/>
    </location>
</feature>
<feature type="repeat" description="LRR 21" evidence="3">
    <location>
        <begin position="561"/>
        <end position="583"/>
    </location>
</feature>
<feature type="repeat" description="LRR 22" evidence="3">
    <location>
        <begin position="653"/>
        <end position="677"/>
    </location>
</feature>
<feature type="repeat" description="LRR 23" evidence="3">
    <location>
        <begin position="678"/>
        <end position="701"/>
    </location>
</feature>
<feature type="repeat" description="LRR 24" evidence="3">
    <location>
        <begin position="702"/>
        <end position="725"/>
    </location>
</feature>
<feature type="repeat" description="LRR 25" evidence="3">
    <location>
        <begin position="727"/>
        <end position="750"/>
    </location>
</feature>
<feature type="domain" description="Protein kinase" evidence="4">
    <location>
        <begin position="883"/>
        <end position="1158"/>
    </location>
</feature>
<feature type="region of interest" description="SERK1 binding" evidence="29 39">
    <location>
        <begin position="640"/>
        <end position="642"/>
    </location>
</feature>
<feature type="region of interest" description="SERK1 binding" evidence="29 39">
    <location>
        <begin position="726"/>
        <end position="729"/>
    </location>
</feature>
<feature type="region of interest" description="SERK1 binding" evidence="29 39">
    <location>
        <begin position="746"/>
        <end position="750"/>
    </location>
</feature>
<feature type="short sequence motif" description="Cys pair 1">
    <location>
        <begin position="62"/>
        <end position="69"/>
    </location>
</feature>
<feature type="short sequence motif" description="Cys pair 2">
    <location>
        <begin position="763"/>
        <end position="770"/>
    </location>
</feature>
<feature type="active site" description="Proton acceptor" evidence="4 5">
    <location>
        <position position="1009"/>
    </location>
</feature>
<feature type="binding site" evidence="25 29">
    <location>
        <position position="597"/>
    </location>
    <ligand>
        <name>brassinolide</name>
        <dbReference type="ChEBI" id="CHEBI:28277"/>
    </ligand>
</feature>
<feature type="binding site" evidence="29">
    <location>
        <position position="642"/>
    </location>
    <ligand>
        <name>brassinolide</name>
        <dbReference type="ChEBI" id="CHEBI:28277"/>
    </ligand>
</feature>
<feature type="binding site" evidence="24 25 29">
    <location>
        <position position="647"/>
    </location>
    <ligand>
        <name>brassinolide</name>
        <dbReference type="ChEBI" id="CHEBI:28277"/>
    </ligand>
</feature>
<feature type="binding site" evidence="25">
    <location>
        <position position="705"/>
    </location>
    <ligand>
        <name>brassinolide</name>
        <dbReference type="ChEBI" id="CHEBI:28277"/>
    </ligand>
</feature>
<feature type="binding site" evidence="4">
    <location>
        <begin position="889"/>
        <end position="897"/>
    </location>
    <ligand>
        <name>ATP</name>
        <dbReference type="ChEBI" id="CHEBI:30616"/>
    </ligand>
</feature>
<feature type="binding site" evidence="30">
    <location>
        <position position="911"/>
    </location>
    <ligand>
        <name>ATP</name>
        <dbReference type="ChEBI" id="CHEBI:30616"/>
    </ligand>
</feature>
<feature type="binding site" evidence="30">
    <location>
        <begin position="957"/>
        <end position="959"/>
    </location>
    <ligand>
        <name>ATP</name>
        <dbReference type="ChEBI" id="CHEBI:30616"/>
    </ligand>
</feature>
<feature type="binding site" evidence="30">
    <location>
        <begin position="963"/>
        <end position="966"/>
    </location>
    <ligand>
        <name>ATP</name>
        <dbReference type="ChEBI" id="CHEBI:30616"/>
    </ligand>
</feature>
<feature type="binding site" evidence="30">
    <location>
        <begin position="1009"/>
        <end position="1014"/>
    </location>
    <ligand>
        <name>ATP</name>
        <dbReference type="ChEBI" id="CHEBI:30616"/>
    </ligand>
</feature>
<feature type="binding site" evidence="30">
    <location>
        <position position="1027"/>
    </location>
    <ligand>
        <name>ATP</name>
        <dbReference type="ChEBI" id="CHEBI:30616"/>
    </ligand>
</feature>
<feature type="site" description="Interacts with SERK1" evidence="29 39">
    <location>
        <position position="705"/>
    </location>
</feature>
<feature type="site" description="Interacts with SERK1" evidence="29 39">
    <location>
        <position position="765"/>
    </location>
</feature>
<feature type="modified residue" description="Phosphotyrosine" evidence="23">
    <location>
        <position position="831"/>
    </location>
</feature>
<feature type="modified residue" description="Phosphoserine" evidence="8 13 21">
    <location>
        <position position="838"/>
    </location>
</feature>
<feature type="modified residue" description="Phosphothreonine" evidence="8">
    <location>
        <position position="842"/>
    </location>
</feature>
<feature type="modified residue" description="Phosphothreonine" evidence="8 21">
    <location>
        <position position="846"/>
    </location>
</feature>
<feature type="modified residue" description="Phosphothreonine" evidence="3">
    <location>
        <position position="851"/>
    </location>
</feature>
<feature type="modified residue" description="Phosphoserine" evidence="8 13 21">
    <location>
        <position position="858"/>
    </location>
</feature>
<feature type="modified residue" description="Phosphothreonine" evidence="8 13">
    <location>
        <position position="872"/>
    </location>
</feature>
<feature type="modified residue" description="Phosphothreonine" evidence="13">
    <location>
        <position position="880"/>
    </location>
</feature>
<feature type="modified residue" description="Phosphoserine" evidence="22">
    <location>
        <position position="887"/>
    </location>
</feature>
<feature type="modified residue" description="Phosphoserine" evidence="3">
    <location>
        <position position="891"/>
    </location>
</feature>
<feature type="modified residue" description="Phosphotyrosine" evidence="23">
    <location>
        <position position="956"/>
    </location>
</feature>
<feature type="modified residue" description="Phosphoserine" evidence="3">
    <location>
        <position position="981"/>
    </location>
</feature>
<feature type="modified residue" description="Phosphothreonine" evidence="13">
    <location>
        <position position="982"/>
    </location>
</feature>
<feature type="modified residue" description="Phosphoserine" evidence="3">
    <location>
        <position position="1035"/>
    </location>
</feature>
<feature type="modified residue" description="Phosphothreonine" evidence="3">
    <location>
        <position position="1039"/>
    </location>
</feature>
<feature type="modified residue" description="Phosphoserine" evidence="3">
    <location>
        <position position="1042"/>
    </location>
</feature>
<feature type="modified residue" description="Phosphoserine" evidence="2 3">
    <location>
        <position position="1044"/>
    </location>
</feature>
<feature type="modified residue" description="Phosphothreonine" evidence="3">
    <location>
        <position position="1045"/>
    </location>
</feature>
<feature type="modified residue" description="Phosphothreonine" evidence="3">
    <location>
        <position position="1049"/>
    </location>
</feature>
<feature type="modified residue" description="Phosphotyrosine" evidence="1">
    <location>
        <position position="1052"/>
    </location>
</feature>
<feature type="modified residue" description="Phosphoserine" evidence="3">
    <location>
        <position position="1060"/>
    </location>
</feature>
<feature type="modified residue" description="Phosphotyrosine" evidence="3">
    <location>
        <position position="1072"/>
    </location>
</feature>
<feature type="modified residue" description="Phosphoserine" evidence="21">
    <location>
        <position position="1166"/>
    </location>
</feature>
<feature type="modified residue" description="Phosphoserine" evidence="13">
    <location>
        <position position="1168"/>
    </location>
</feature>
<feature type="modified residue" description="Phosphothreonine" evidence="3">
    <location>
        <position position="1169"/>
    </location>
</feature>
<feature type="modified residue" description="Phosphoserine" evidence="3">
    <location>
        <position position="1172"/>
    </location>
</feature>
<feature type="modified residue" description="Phosphoserine" evidence="3">
    <location>
        <position position="1179"/>
    </location>
</feature>
<feature type="modified residue" description="Phosphothreonine" evidence="21">
    <location>
        <position position="1180"/>
    </location>
</feature>
<feature type="modified residue" description="Phosphoserine" evidence="3">
    <location>
        <position position="1187"/>
    </location>
</feature>
<feature type="glycosylation site" description="N-linked (GlcNAc...) asparagine" evidence="24 25 29">
    <location>
        <position position="112"/>
    </location>
</feature>
<feature type="glycosylation site" description="N-linked (GlcNAc...) asparagine" evidence="24 25 29 30">
    <location>
        <position position="154"/>
    </location>
</feature>
<feature type="glycosylation site" description="N-linked (GlcNAc...) asparagine" evidence="24 25 29">
    <location>
        <position position="233"/>
    </location>
</feature>
<feature type="glycosylation site" description="N-linked (GlcNAc...) asparagine" evidence="24 25 29 30">
    <location>
        <position position="275"/>
    </location>
</feature>
<feature type="glycosylation site" description="N-linked (GlcNAc...) asparagine" evidence="24 25 29">
    <location>
        <position position="351"/>
    </location>
</feature>
<feature type="glycosylation site" description="N-linked (GlcNAc...) asparagine" evidence="3">
    <location>
        <position position="387"/>
    </location>
</feature>
<feature type="glycosylation site" description="N-linked (GlcNAc...) asparagine" evidence="3">
    <location>
        <position position="401"/>
    </location>
</feature>
<feature type="glycosylation site" description="N-linked (GlcNAc...) asparagine" evidence="3">
    <location>
        <position position="438"/>
    </location>
</feature>
<feature type="glycosylation site" description="N-linked (GlcNAc...) asparagine" evidence="25">
    <location>
        <position position="510"/>
    </location>
</feature>
<feature type="glycosylation site" description="N-linked (GlcNAc...) asparagine" evidence="24 25 29 30">
    <location>
        <position position="545"/>
    </location>
</feature>
<feature type="glycosylation site" description="N-linked (GlcNAc...) asparagine" evidence="25 29">
    <location>
        <position position="573"/>
    </location>
</feature>
<feature type="glycosylation site" description="N-linked (GlcNAc...) asparagine" evidence="3">
    <location>
        <position position="636"/>
    </location>
</feature>
<feature type="glycosylation site" description="N-linked (GlcNAc...) asparagine" evidence="3">
    <location>
        <position position="653"/>
    </location>
</feature>
<feature type="glycosylation site" description="N-linked (GlcNAc...) asparagine" evidence="3">
    <location>
        <position position="737"/>
    </location>
</feature>
<feature type="mutagenesis site" description="In bri1-5; brassinosteroid-insensitive semi-dwarf mutant." evidence="6">
    <original>C</original>
    <variation>Y</variation>
    <location>
        <position position="69"/>
    </location>
</feature>
<feature type="mutagenesis site" description="In bri1-113; brassinosteroid-insensitive semi-dwarf mutant." evidence="33">
    <original>G</original>
    <variation>E</variation>
    <location>
        <position position="611"/>
    </location>
</feature>
<feature type="mutagenesis site" description="In bri1-7; brassinosteroid-insensitive semi-dwarf mutant." evidence="6">
    <original>G</original>
    <variation>S</variation>
    <location>
        <position position="613"/>
    </location>
</feature>
<feature type="mutagenesis site" description="In bri1-6; brassinosteroid-insensitive semi-dwarf mutant." evidence="6">
    <original>G</original>
    <variation>D</variation>
    <location>
        <position position="644"/>
    </location>
</feature>
<feature type="mutagenesis site" description="In bri1-9; brassinosteroid-insensitive semi-dwarf mutant." evidence="6">
    <original>S</original>
    <variation>F</variation>
    <location>
        <position position="662"/>
    </location>
</feature>
<feature type="mutagenesis site" description="In bri1-102; brassinosteroid-insensitive dwarf mutant." evidence="7">
    <original>T</original>
    <variation>I</variation>
    <location>
        <position position="750"/>
    </location>
</feature>
<feature type="mutagenesis site" description="No effect on kinase activity, flowering time or leaf size, but altered leaf shape." evidence="23">
    <original>Y</original>
    <variation>D</variation>
    <variation>E</variation>
    <location>
        <position position="831"/>
    </location>
</feature>
<feature type="mutagenesis site" description="No effect on kinase activity but altered flowering time and leaf size and shape." evidence="23">
    <original>Y</original>
    <variation>F</variation>
    <location>
        <position position="831"/>
    </location>
</feature>
<feature type="mutagenesis site" description="Decreases peptide phosphorylation, but no effect on autophosphorylation." evidence="13 21">
    <original>S</original>
    <variation>A</variation>
    <location>
        <position position="838"/>
    </location>
</feature>
<feature type="mutagenesis site" description="Increased kinase activity; when associated with D-842; D-846 and D-858." evidence="13 21">
    <original>S</original>
    <variation>D</variation>
    <location>
        <position position="838"/>
    </location>
</feature>
<feature type="mutagenesis site" description="Decreases peptide phosphorylation, but no effect on autophosphorylation." evidence="13 21">
    <original>T</original>
    <variation>A</variation>
    <location>
        <position position="842"/>
    </location>
</feature>
<feature type="mutagenesis site" description="Increased kinase activity; when associated with D-838; D-846 and D-858." evidence="13 21">
    <original>T</original>
    <variation>D</variation>
    <location>
        <position position="842"/>
    </location>
</feature>
<feature type="mutagenesis site" description="Decreases peptide phosphorylation, but no effect on autophosphorylation." evidence="13 21">
    <original>T</original>
    <variation>A</variation>
    <location>
        <position position="846"/>
    </location>
</feature>
<feature type="mutagenesis site" description="Increased kinase activity; when associated with D-838; D-842 and D-858." evidence="13 21">
    <original>T</original>
    <variation>D</variation>
    <location>
        <position position="846"/>
    </location>
</feature>
<feature type="mutagenesis site" description="Decreases peptide phosphorylation, but no effect on autophosphorylation." evidence="13 21">
    <original>S</original>
    <variation>A</variation>
    <location>
        <position position="858"/>
    </location>
</feature>
<feature type="mutagenesis site" description="Increased kinase activity; when associated with D-838; D-842 and D-846." evidence="13 21">
    <original>S</original>
    <variation>D</variation>
    <location>
        <position position="858"/>
    </location>
</feature>
<feature type="mutagenesis site" description="10-fold increase in peptide phosphorylation." evidence="13">
    <original>T</original>
    <variation>A</variation>
    <location>
        <position position="872"/>
    </location>
</feature>
<feature type="mutagenesis site" description="No effect on kinase activity." evidence="23">
    <original>Y</original>
    <variation>F</variation>
    <location>
        <position position="898"/>
    </location>
</feature>
<feature type="mutagenesis site" description="In bri1-1; brassinosteroid-insensitive dwarf mutant." evidence="7">
    <original>A</original>
    <variation>T</variation>
    <location>
        <position position="909"/>
    </location>
</feature>
<feature type="mutagenesis site" description="Loss of kinase activity; dwarf mutant." evidence="8">
    <original>K</original>
    <variation>E</variation>
    <location>
        <position position="911"/>
    </location>
</feature>
<feature type="mutagenesis site" description="No effect on kinase activity." evidence="23">
    <original>Y</original>
    <variation>F</variation>
    <location>
        <position position="945"/>
    </location>
</feature>
<feature type="mutagenesis site" description="Loss of kinase activity." evidence="23">
    <original>Y</original>
    <variation>F</variation>
    <location>
        <position position="956"/>
    </location>
</feature>
<feature type="mutagenesis site" description="No effect on kinase activity." evidence="23">
    <original>Y</original>
    <variation>F</variation>
    <location>
        <position position="961"/>
    </location>
</feature>
<feature type="mutagenesis site" description="In bri1-8; brassinosteroid-insensitive dwarf mutant." evidence="6">
    <original>R</original>
    <variation>N</variation>
    <location>
        <position position="983"/>
    </location>
</feature>
<feature type="mutagenesis site" description="In bri1-108; brassinosteroid-insensitive dwarf mutant." evidence="7">
    <original>R</original>
    <variation>Q</variation>
    <location>
        <position position="983"/>
    </location>
</feature>
<feature type="mutagenesis site" description="In bri1-301; impaired kinase activity and loss of autophosphorylation." evidence="19">
    <original>G</original>
    <variation>I</variation>
    <location>
        <position position="989"/>
    </location>
</feature>
<feature type="mutagenesis site" description="In bri1-104; brassinosteroid-insensitive dwarf mutant and slightly reduced activity, but no effect on interaction with TTL." evidence="11 33">
    <original>A</original>
    <variation>T</variation>
    <location>
        <position position="1031"/>
    </location>
</feature>
<feature type="mutagenesis site" description="Abolishes peptide phosphorylation, and to a lower level autophosphorylation." evidence="13">
    <original>T</original>
    <variation>A</variation>
    <location>
        <position position="1039"/>
    </location>
</feature>
<feature type="mutagenesis site" description="Abolishes peptide phosphorylation, and to a lower level autophosphorylation." evidence="13">
    <original>S</original>
    <variation>A</variation>
    <location>
        <position position="1042"/>
    </location>
</feature>
<feature type="mutagenesis site" description="Abolishes peptide phosphorylation, and autophosphorylation." evidence="13">
    <original>S</original>
    <variation>A</variation>
    <location>
        <position position="1044"/>
    </location>
</feature>
<feature type="mutagenesis site" description="Abolishes peptide phosphorylation, and autophosphorylation." evidence="13">
    <original>T</original>
    <variation>A</variation>
    <location>
        <position position="1045"/>
    </location>
</feature>
<feature type="mutagenesis site" description="In bri1-115; brassinosteroid-insensitive dwarf mutant, reduced activity and no interaction with TTL." evidence="11 33">
    <original>G</original>
    <variation>D</variation>
    <location>
        <position position="1048"/>
    </location>
</feature>
<feature type="mutagenesis site" description="Abolishes peptide phosphorylation, and autophosphorylation." evidence="13 21">
    <original>T</original>
    <variation>A</variation>
    <location>
        <position position="1049"/>
    </location>
</feature>
<feature type="mutagenesis site" description="Loss of kinase activity and brassinosteroid signaling." evidence="13 21">
    <original>T</original>
    <variation>D</variation>
    <location>
        <position position="1049"/>
    </location>
</feature>
<feature type="mutagenesis site" description="Loss of kinase activity." evidence="23">
    <original>Y</original>
    <variation>F</variation>
    <location>
        <position position="1052"/>
    </location>
</feature>
<feature type="mutagenesis site" description="Loss of kinase activity." evidence="23">
    <original>Y</original>
    <variation>F</variation>
    <location>
        <position position="1057"/>
    </location>
</feature>
<feature type="mutagenesis site" description="No effect on kinase activity." evidence="23">
    <original>Y</original>
    <variation>F</variation>
    <location>
        <position position="1058"/>
    </location>
</feature>
<feature type="mutagenesis site" description="No effect on kinase activity." evidence="23">
    <original>Y</original>
    <variation>F</variation>
    <location>
        <position position="1070"/>
    </location>
</feature>
<feature type="mutagenesis site" description="Loss of kinase activity." evidence="23">
    <original>Y</original>
    <variation>F</variation>
    <location>
        <position position="1072"/>
    </location>
</feature>
<feature type="mutagenesis site" description="In bri1-101; brassinosteroid-insensitive dwarf mutant, lost activity and no interaction with TTL." evidence="11 33">
    <original>E</original>
    <variation>K</variation>
    <location>
        <position position="1078"/>
    </location>
</feature>
<feature type="mutagenesis site" description="In bri1-117; brassinosteroid-insensitive dwarf mutant." evidence="7">
    <original>D</original>
    <variation>N</variation>
    <location>
        <position position="1139"/>
    </location>
</feature>
<feature type="mutagenesis site" description="Increased kinase activity; when associated with D-1168; D-1172; D-1179 and D-1180." evidence="21">
    <original>S</original>
    <variation>D</variation>
    <location>
        <position position="1166"/>
    </location>
</feature>
<feature type="mutagenesis site" description="Decreases peptide phosphorylation, but no effect on autophosphorylation." evidence="13 21">
    <original>S</original>
    <variation>A</variation>
    <location>
        <position position="1168"/>
    </location>
</feature>
<feature type="mutagenesis site" description="Increased kinase activity; when associated with D-1166; D-1172; D-1179 and D-1180." evidence="13 21">
    <original>S</original>
    <variation>D</variation>
    <location>
        <position position="1168"/>
    </location>
</feature>
<feature type="mutagenesis site" description="Decreases peptide phosphorylation, but no effect on autophosphorylation." evidence="13 21">
    <original>S</original>
    <variation>A</variation>
    <location>
        <position position="1172"/>
    </location>
</feature>
<feature type="mutagenesis site" description="Increased kinase activity; when associated with D-1166; D-1168; D-1179 and D-1180." evidence="13 21">
    <original>S</original>
    <variation>D</variation>
    <location>
        <position position="1172"/>
    </location>
</feature>
<feature type="mutagenesis site" description="Decreases peptide phosphorylation, but no effect on autophosphorylation." evidence="13">
    <original>ST</original>
    <variation>A</variation>
    <location>
        <begin position="1179"/>
        <end position="1180"/>
    </location>
</feature>
<feature type="mutagenesis site" description="Increased kinase activity; when associated with D-1166; D-1168; D-1172 and D-1180." evidence="21">
    <original>S</original>
    <variation>D</variation>
    <location>
        <position position="1179"/>
    </location>
</feature>
<feature type="mutagenesis site" description="Increased kinase activity; when associated with D-1166; D-1168; D-1172 and D-1179." evidence="21">
    <original>T</original>
    <variation>D</variation>
    <location>
        <position position="1180"/>
    </location>
</feature>
<feature type="mutagenesis site" description="Decreases peptide phosphorylation, but no effect on autophosphorylation." evidence="13">
    <original>S</original>
    <variation>A</variation>
    <location>
        <position position="1187"/>
    </location>
</feature>
<feature type="helix" evidence="41">
    <location>
        <begin position="32"/>
        <end position="43"/>
    </location>
</feature>
<feature type="helix" evidence="42">
    <location>
        <begin position="49"/>
        <end position="51"/>
    </location>
</feature>
<feature type="strand" evidence="40">
    <location>
        <begin position="57"/>
        <end position="59"/>
    </location>
</feature>
<feature type="helix" evidence="41">
    <location>
        <begin position="61"/>
        <end position="63"/>
    </location>
</feature>
<feature type="strand" evidence="41">
    <location>
        <begin position="67"/>
        <end position="70"/>
    </location>
</feature>
<feature type="strand" evidence="41">
    <location>
        <begin position="73"/>
        <end position="78"/>
    </location>
</feature>
<feature type="helix" evidence="41">
    <location>
        <begin position="88"/>
        <end position="94"/>
    </location>
</feature>
<feature type="turn" evidence="41">
    <location>
        <begin position="95"/>
        <end position="97"/>
    </location>
</feature>
<feature type="strand" evidence="41">
    <location>
        <begin position="103"/>
        <end position="105"/>
    </location>
</feature>
<feature type="strand" evidence="41">
    <location>
        <begin position="111"/>
        <end position="113"/>
    </location>
</feature>
<feature type="strand" evidence="41">
    <location>
        <begin position="126"/>
        <end position="128"/>
    </location>
</feature>
<feature type="strand" evidence="41">
    <location>
        <begin position="131"/>
        <end position="137"/>
    </location>
</feature>
<feature type="helix" evidence="41">
    <location>
        <begin position="138"/>
        <end position="146"/>
    </location>
</feature>
<feature type="strand" evidence="41">
    <location>
        <begin position="152"/>
        <end position="154"/>
    </location>
</feature>
<feature type="strand" evidence="41">
    <location>
        <begin position="157"/>
        <end position="161"/>
    </location>
</feature>
<feature type="strand" evidence="41">
    <location>
        <begin position="176"/>
        <end position="179"/>
    </location>
</feature>
<feature type="strand" evidence="40">
    <location>
        <begin position="182"/>
        <end position="184"/>
    </location>
</feature>
<feature type="strand" evidence="41">
    <location>
        <begin position="186"/>
        <end position="188"/>
    </location>
</feature>
<feature type="helix" evidence="41">
    <location>
        <begin position="190"/>
        <end position="195"/>
    </location>
</feature>
<feature type="strand" evidence="41">
    <location>
        <begin position="204"/>
        <end position="206"/>
    </location>
</feature>
<feature type="strand" evidence="41">
    <location>
        <begin position="209"/>
        <end position="214"/>
    </location>
</feature>
<feature type="strand" evidence="41">
    <location>
        <begin position="226"/>
        <end position="228"/>
    </location>
</feature>
<feature type="strand" evidence="41">
    <location>
        <begin position="249"/>
        <end position="251"/>
    </location>
</feature>
<feature type="helix" evidence="41">
    <location>
        <begin position="261"/>
        <end position="264"/>
    </location>
</feature>
<feature type="turn" evidence="41">
    <location>
        <begin position="265"/>
        <end position="267"/>
    </location>
</feature>
<feature type="strand" evidence="41">
    <location>
        <begin position="273"/>
        <end position="275"/>
    </location>
</feature>
<feature type="strand" evidence="41">
    <location>
        <begin position="282"/>
        <end position="284"/>
    </location>
</feature>
<feature type="strand" evidence="41">
    <location>
        <begin position="295"/>
        <end position="297"/>
    </location>
</feature>
<feature type="strand" evidence="41">
    <location>
        <begin position="300"/>
        <end position="306"/>
    </location>
</feature>
<feature type="helix" evidence="40">
    <location>
        <begin position="309"/>
        <end position="314"/>
    </location>
</feature>
<feature type="turn" evidence="40">
    <location>
        <begin position="315"/>
        <end position="317"/>
    </location>
</feature>
<feature type="strand" evidence="41">
    <location>
        <begin position="319"/>
        <end position="322"/>
    </location>
</feature>
<feature type="strand" evidence="41">
    <location>
        <begin position="325"/>
        <end position="330"/>
    </location>
</feature>
<feature type="helix" evidence="41">
    <location>
        <begin position="334"/>
        <end position="338"/>
    </location>
</feature>
<feature type="strand" evidence="41">
    <location>
        <begin position="344"/>
        <end position="346"/>
    </location>
</feature>
<feature type="strand" evidence="41">
    <location>
        <begin position="349"/>
        <end position="355"/>
    </location>
</feature>
<feature type="helix" evidence="41">
    <location>
        <begin position="358"/>
        <end position="361"/>
    </location>
</feature>
<feature type="strand" evidence="41">
    <location>
        <begin position="369"/>
        <end position="371"/>
    </location>
</feature>
<feature type="strand" evidence="41">
    <location>
        <begin position="374"/>
        <end position="379"/>
    </location>
</feature>
<feature type="helix" evidence="41">
    <location>
        <begin position="385"/>
        <end position="388"/>
    </location>
</feature>
<feature type="turn" evidence="40">
    <location>
        <begin position="389"/>
        <end position="391"/>
    </location>
</feature>
<feature type="strand" evidence="41">
    <location>
        <begin position="393"/>
        <end position="396"/>
    </location>
</feature>
<feature type="strand" evidence="41">
    <location>
        <begin position="399"/>
        <end position="405"/>
    </location>
</feature>
<feature type="turn" evidence="41">
    <location>
        <begin position="408"/>
        <end position="411"/>
    </location>
</feature>
<feature type="strand" evidence="43">
    <location>
        <begin position="413"/>
        <end position="415"/>
    </location>
</feature>
<feature type="strand" evidence="41">
    <location>
        <begin position="420"/>
        <end position="422"/>
    </location>
</feature>
<feature type="strand" evidence="41">
    <location>
        <begin position="425"/>
        <end position="431"/>
    </location>
</feature>
<feature type="helix" evidence="41">
    <location>
        <begin position="434"/>
        <end position="438"/>
    </location>
</feature>
<feature type="strand" evidence="41">
    <location>
        <begin position="444"/>
        <end position="446"/>
    </location>
</feature>
<feature type="strand" evidence="41">
    <location>
        <begin position="449"/>
        <end position="454"/>
    </location>
</feature>
<feature type="helix" evidence="41">
    <location>
        <begin position="458"/>
        <end position="462"/>
    </location>
</feature>
<feature type="strand" evidence="41">
    <location>
        <begin position="468"/>
        <end position="470"/>
    </location>
</feature>
<feature type="helix" evidence="41">
    <location>
        <begin position="482"/>
        <end position="486"/>
    </location>
</feature>
<feature type="strand" evidence="41">
    <location>
        <begin position="492"/>
        <end position="494"/>
    </location>
</feature>
<feature type="strand" evidence="42">
    <location>
        <begin position="497"/>
        <end position="500"/>
    </location>
</feature>
<feature type="helix" evidence="41">
    <location>
        <begin position="506"/>
        <end position="510"/>
    </location>
</feature>
<feature type="strand" evidence="41">
    <location>
        <begin position="516"/>
        <end position="518"/>
    </location>
</feature>
<feature type="strand" evidence="42">
    <location>
        <begin position="525"/>
        <end position="527"/>
    </location>
</feature>
<feature type="helix" evidence="41">
    <location>
        <begin position="530"/>
        <end position="534"/>
    </location>
</feature>
<feature type="strand" evidence="41">
    <location>
        <begin position="540"/>
        <end position="542"/>
    </location>
</feature>
<feature type="strand" evidence="41">
    <location>
        <begin position="549"/>
        <end position="551"/>
    </location>
</feature>
<feature type="helix" evidence="41">
    <location>
        <begin position="554"/>
        <end position="558"/>
    </location>
</feature>
<feature type="strand" evidence="41">
    <location>
        <begin position="564"/>
        <end position="566"/>
    </location>
</feature>
<feature type="strand" evidence="41">
    <location>
        <begin position="569"/>
        <end position="575"/>
    </location>
</feature>
<feature type="helix" evidence="41">
    <location>
        <begin position="578"/>
        <end position="581"/>
    </location>
</feature>
<feature type="turn" evidence="41">
    <location>
        <begin position="582"/>
        <end position="585"/>
    </location>
</feature>
<feature type="turn" evidence="43">
    <location>
        <begin position="591"/>
        <end position="594"/>
    </location>
</feature>
<feature type="strand" evidence="41">
    <location>
        <begin position="596"/>
        <end position="601"/>
    </location>
</feature>
<feature type="strand" evidence="41">
    <location>
        <begin position="611"/>
        <end position="617"/>
    </location>
</feature>
<feature type="helix" evidence="41">
    <location>
        <begin position="623"/>
        <end position="631"/>
    </location>
</feature>
<feature type="strand" evidence="41">
    <location>
        <begin position="641"/>
        <end position="645"/>
    </location>
</feature>
<feature type="strand" evidence="41">
    <location>
        <begin position="651"/>
        <end position="654"/>
    </location>
</feature>
<feature type="strand" evidence="41">
    <location>
        <begin position="658"/>
        <end position="660"/>
    </location>
</feature>
<feature type="strand" evidence="41">
    <location>
        <begin position="663"/>
        <end position="668"/>
    </location>
</feature>
<feature type="helix" evidence="41">
    <location>
        <begin position="672"/>
        <end position="676"/>
    </location>
</feature>
<feature type="strand" evidence="41">
    <location>
        <begin position="682"/>
        <end position="684"/>
    </location>
</feature>
<feature type="strand" evidence="40">
    <location>
        <begin position="687"/>
        <end position="693"/>
    </location>
</feature>
<feature type="helix" evidence="41">
    <location>
        <begin position="696"/>
        <end position="700"/>
    </location>
</feature>
<feature type="strand" evidence="41">
    <location>
        <begin position="706"/>
        <end position="708"/>
    </location>
</feature>
<feature type="strand" evidence="40">
    <location>
        <begin position="715"/>
        <end position="717"/>
    </location>
</feature>
<feature type="helix" evidence="41">
    <location>
        <begin position="720"/>
        <end position="724"/>
    </location>
</feature>
<feature type="strand" evidence="41">
    <location>
        <begin position="729"/>
        <end position="732"/>
    </location>
</feature>
<feature type="strand" evidence="41">
    <location>
        <begin position="735"/>
        <end position="741"/>
    </location>
</feature>
<feature type="strand" evidence="41">
    <location>
        <begin position="744"/>
        <end position="747"/>
    </location>
</feature>
<feature type="helix" evidence="41">
    <location>
        <begin position="748"/>
        <end position="750"/>
    </location>
</feature>
<feature type="helix" evidence="41">
    <location>
        <begin position="753"/>
        <end position="756"/>
    </location>
</feature>
<feature type="strand" evidence="41">
    <location>
        <begin position="761"/>
        <end position="764"/>
    </location>
</feature>
<feature type="helix" evidence="45">
    <location>
        <begin position="873"/>
        <end position="879"/>
    </location>
</feature>
<feature type="turn" evidence="45">
    <location>
        <begin position="880"/>
        <end position="883"/>
    </location>
</feature>
<feature type="helix" evidence="45">
    <location>
        <begin position="885"/>
        <end position="887"/>
    </location>
</feature>
<feature type="strand" evidence="45">
    <location>
        <begin position="888"/>
        <end position="892"/>
    </location>
</feature>
<feature type="strand" evidence="45">
    <location>
        <begin position="895"/>
        <end position="901"/>
    </location>
</feature>
<feature type="strand" evidence="45">
    <location>
        <begin position="907"/>
        <end position="913"/>
    </location>
</feature>
<feature type="turn" evidence="45">
    <location>
        <begin position="916"/>
        <end position="918"/>
    </location>
</feature>
<feature type="helix" evidence="45">
    <location>
        <begin position="919"/>
        <end position="929"/>
    </location>
</feature>
<feature type="helix" evidence="45">
    <location>
        <begin position="931"/>
        <end position="933"/>
    </location>
</feature>
<feature type="strand" evidence="45">
    <location>
        <begin position="942"/>
        <end position="948"/>
    </location>
</feature>
<feature type="strand" evidence="45">
    <location>
        <begin position="951"/>
        <end position="957"/>
    </location>
</feature>
<feature type="helix" evidence="45">
    <location>
        <begin position="964"/>
        <end position="969"/>
    </location>
</feature>
<feature type="helix" evidence="46">
    <location>
        <begin position="971"/>
        <end position="973"/>
    </location>
</feature>
<feature type="helix" evidence="45">
    <location>
        <begin position="980"/>
        <end position="999"/>
    </location>
</feature>
<feature type="strand" evidence="45">
    <location>
        <begin position="1001"/>
        <end position="1006"/>
    </location>
</feature>
<feature type="helix" evidence="45">
    <location>
        <begin position="1012"/>
        <end position="1014"/>
    </location>
</feature>
<feature type="strand" evidence="45">
    <location>
        <begin position="1015"/>
        <end position="1017"/>
    </location>
</feature>
<feature type="strand" evidence="45">
    <location>
        <begin position="1023"/>
        <end position="1025"/>
    </location>
</feature>
<feature type="strand" evidence="45">
    <location>
        <begin position="1032"/>
        <end position="1034"/>
    </location>
</feature>
<feature type="turn" evidence="45">
    <location>
        <begin position="1050"/>
        <end position="1052"/>
    </location>
</feature>
<feature type="helix" evidence="45">
    <location>
        <begin position="1055"/>
        <end position="1058"/>
    </location>
</feature>
<feature type="strand" evidence="45">
    <location>
        <begin position="1060"/>
        <end position="1063"/>
    </location>
</feature>
<feature type="helix" evidence="45">
    <location>
        <begin position="1065"/>
        <end position="1081"/>
    </location>
</feature>
<feature type="turn" evidence="44">
    <location>
        <begin position="1089"/>
        <end position="1093"/>
    </location>
</feature>
<feature type="helix" evidence="45">
    <location>
        <begin position="1096"/>
        <end position="1103"/>
    </location>
</feature>
<feature type="helix" evidence="45">
    <location>
        <begin position="1108"/>
        <end position="1110"/>
    </location>
</feature>
<feature type="helix" evidence="45">
    <location>
        <begin position="1114"/>
        <end position="1117"/>
    </location>
</feature>
<feature type="helix" evidence="45">
    <location>
        <begin position="1121"/>
        <end position="1123"/>
    </location>
</feature>
<feature type="helix" evidence="45">
    <location>
        <begin position="1124"/>
        <end position="1137"/>
    </location>
</feature>
<feature type="helix" evidence="45">
    <location>
        <begin position="1142"/>
        <end position="1144"/>
    </location>
</feature>
<feature type="helix" evidence="45">
    <location>
        <begin position="1148"/>
        <end position="1159"/>
    </location>
</feature>
<dbReference type="EC" id="2.7.10.1" evidence="35"/>
<dbReference type="EC" id="2.7.11.1" evidence="35"/>
<dbReference type="EMBL" id="AF017056">
    <property type="protein sequence ID" value="AAC49810.1"/>
    <property type="molecule type" value="Genomic_DNA"/>
</dbReference>
<dbReference type="EMBL" id="FJ708766">
    <property type="protein sequence ID" value="ACN59359.1"/>
    <property type="molecule type" value="mRNA"/>
</dbReference>
<dbReference type="EMBL" id="AL078620">
    <property type="protein sequence ID" value="CAB44675.1"/>
    <property type="molecule type" value="Genomic_DNA"/>
</dbReference>
<dbReference type="EMBL" id="AL161595">
    <property type="protein sequence ID" value="CAB80603.1"/>
    <property type="molecule type" value="Genomic_DNA"/>
</dbReference>
<dbReference type="EMBL" id="CP002687">
    <property type="protein sequence ID" value="AEE87069.1"/>
    <property type="molecule type" value="Genomic_DNA"/>
</dbReference>
<dbReference type="PIR" id="T09356">
    <property type="entry name" value="T09356"/>
</dbReference>
<dbReference type="RefSeq" id="NP_195650.1">
    <property type="nucleotide sequence ID" value="NM_120100.3"/>
</dbReference>
<dbReference type="PDB" id="3RGX">
    <property type="method" value="X-ray"/>
    <property type="resolution" value="2.47 A"/>
    <property type="chains" value="A=23-784"/>
</dbReference>
<dbReference type="PDB" id="3RGZ">
    <property type="method" value="X-ray"/>
    <property type="resolution" value="2.28 A"/>
    <property type="chains" value="A=23-784"/>
</dbReference>
<dbReference type="PDB" id="3RIZ">
    <property type="method" value="X-ray"/>
    <property type="resolution" value="2.52 A"/>
    <property type="chains" value="A=29-788"/>
</dbReference>
<dbReference type="PDB" id="3RJ0">
    <property type="method" value="X-ray"/>
    <property type="resolution" value="2.54 A"/>
    <property type="chains" value="A=29-788"/>
</dbReference>
<dbReference type="PDB" id="4LSA">
    <property type="method" value="X-ray"/>
    <property type="resolution" value="2.50 A"/>
    <property type="chains" value="A=29-788"/>
</dbReference>
<dbReference type="PDB" id="4LSX">
    <property type="method" value="X-ray"/>
    <property type="resolution" value="3.30 A"/>
    <property type="chains" value="A/B=29-788"/>
</dbReference>
<dbReference type="PDB" id="4M7E">
    <property type="method" value="X-ray"/>
    <property type="resolution" value="3.60 A"/>
    <property type="chains" value="A/B=24-784"/>
</dbReference>
<dbReference type="PDB" id="4OH4">
    <property type="method" value="X-ray"/>
    <property type="resolution" value="2.25 A"/>
    <property type="chains" value="A/B=863-1172"/>
</dbReference>
<dbReference type="PDB" id="4Q5J">
    <property type="method" value="X-ray"/>
    <property type="resolution" value="2.77 A"/>
    <property type="chains" value="A/B=863-1180"/>
</dbReference>
<dbReference type="PDB" id="5LPB">
    <property type="method" value="X-ray"/>
    <property type="resolution" value="1.98 A"/>
    <property type="chains" value="A=865-1160"/>
</dbReference>
<dbReference type="PDB" id="5LPV">
    <property type="method" value="X-ray"/>
    <property type="resolution" value="2.70 A"/>
    <property type="chains" value="A=865-1160"/>
</dbReference>
<dbReference type="PDB" id="5LPW">
    <property type="method" value="X-ray"/>
    <property type="resolution" value="2.43 A"/>
    <property type="chains" value="A=865-1160"/>
</dbReference>
<dbReference type="PDB" id="5LPY">
    <property type="method" value="X-ray"/>
    <property type="resolution" value="2.30 A"/>
    <property type="chains" value="A=865-1160"/>
</dbReference>
<dbReference type="PDB" id="5LPZ">
    <property type="method" value="X-ray"/>
    <property type="resolution" value="2.48 A"/>
    <property type="chains" value="A=865-1196"/>
</dbReference>
<dbReference type="PDB" id="6FIF">
    <property type="method" value="X-ray"/>
    <property type="resolution" value="2.54 A"/>
    <property type="chains" value="A=1-788"/>
</dbReference>
<dbReference type="PDBsum" id="3RGX"/>
<dbReference type="PDBsum" id="3RGZ"/>
<dbReference type="PDBsum" id="3RIZ"/>
<dbReference type="PDBsum" id="3RJ0"/>
<dbReference type="PDBsum" id="4LSA"/>
<dbReference type="PDBsum" id="4LSX"/>
<dbReference type="PDBsum" id="4M7E"/>
<dbReference type="PDBsum" id="4OH4"/>
<dbReference type="PDBsum" id="4Q5J"/>
<dbReference type="PDBsum" id="5LPB"/>
<dbReference type="PDBsum" id="5LPV"/>
<dbReference type="PDBsum" id="5LPW"/>
<dbReference type="PDBsum" id="5LPY"/>
<dbReference type="PDBsum" id="5LPZ"/>
<dbReference type="PDBsum" id="6FIF"/>
<dbReference type="SMR" id="O22476"/>
<dbReference type="BioGRID" id="15375">
    <property type="interactions" value="45"/>
</dbReference>
<dbReference type="DIP" id="DIP-45997N"/>
<dbReference type="FunCoup" id="O22476">
    <property type="interactions" value="1624"/>
</dbReference>
<dbReference type="IntAct" id="O22476">
    <property type="interactions" value="32"/>
</dbReference>
<dbReference type="STRING" id="3702.O22476"/>
<dbReference type="TCDB" id="1.A.87.2.6">
    <property type="family name" value="the mechanosensitive calcium channel (mca) family"/>
</dbReference>
<dbReference type="GlyCosmos" id="O22476">
    <property type="glycosylation" value="14 sites, No reported glycans"/>
</dbReference>
<dbReference type="GlyGen" id="O22476">
    <property type="glycosylation" value="17 sites"/>
</dbReference>
<dbReference type="iPTMnet" id="O22476"/>
<dbReference type="PaxDb" id="3702-AT4G39400.1"/>
<dbReference type="ProteomicsDB" id="240703"/>
<dbReference type="EnsemblPlants" id="AT4G39400.1">
    <property type="protein sequence ID" value="AT4G39400.1"/>
    <property type="gene ID" value="AT4G39400"/>
</dbReference>
<dbReference type="GeneID" id="830095"/>
<dbReference type="Gramene" id="AT4G39400.1">
    <property type="protein sequence ID" value="AT4G39400.1"/>
    <property type="gene ID" value="AT4G39400"/>
</dbReference>
<dbReference type="KEGG" id="ath:AT4G39400"/>
<dbReference type="Araport" id="AT4G39400"/>
<dbReference type="TAIR" id="AT4G39400">
    <property type="gene designation" value="BRI1"/>
</dbReference>
<dbReference type="eggNOG" id="ENOG502QRF2">
    <property type="taxonomic scope" value="Eukaryota"/>
</dbReference>
<dbReference type="HOGENOM" id="CLU_000288_22_4_1"/>
<dbReference type="InParanoid" id="O22476"/>
<dbReference type="OMA" id="GWVKLHA"/>
<dbReference type="PhylomeDB" id="O22476"/>
<dbReference type="EvolutionaryTrace" id="O22476"/>
<dbReference type="PRO" id="PR:O22476"/>
<dbReference type="Proteomes" id="UP000006548">
    <property type="component" value="Chromosome 4"/>
</dbReference>
<dbReference type="ExpressionAtlas" id="O22476">
    <property type="expression patterns" value="baseline and differential"/>
</dbReference>
<dbReference type="GO" id="GO:0005768">
    <property type="term" value="C:endosome"/>
    <property type="evidence" value="ECO:0000314"/>
    <property type="project" value="TAIR"/>
</dbReference>
<dbReference type="GO" id="GO:0010008">
    <property type="term" value="C:endosome membrane"/>
    <property type="evidence" value="ECO:0007669"/>
    <property type="project" value="UniProtKB-SubCell"/>
</dbReference>
<dbReference type="GO" id="GO:0005886">
    <property type="term" value="C:plasma membrane"/>
    <property type="evidence" value="ECO:0000314"/>
    <property type="project" value="TAIR"/>
</dbReference>
<dbReference type="GO" id="GO:0032991">
    <property type="term" value="C:protein-containing complex"/>
    <property type="evidence" value="ECO:0000353"/>
    <property type="project" value="TAIR"/>
</dbReference>
<dbReference type="GO" id="GO:0005524">
    <property type="term" value="F:ATP binding"/>
    <property type="evidence" value="ECO:0007669"/>
    <property type="project" value="UniProtKB-KW"/>
</dbReference>
<dbReference type="GO" id="GO:0042802">
    <property type="term" value="F:identical protein binding"/>
    <property type="evidence" value="ECO:0000353"/>
    <property type="project" value="IntAct"/>
</dbReference>
<dbReference type="GO" id="GO:0046982">
    <property type="term" value="F:protein heterodimerization activity"/>
    <property type="evidence" value="ECO:0000353"/>
    <property type="project" value="TAIR"/>
</dbReference>
<dbReference type="GO" id="GO:0042803">
    <property type="term" value="F:protein homodimerization activity"/>
    <property type="evidence" value="ECO:0000314"/>
    <property type="project" value="TAIR"/>
</dbReference>
<dbReference type="GO" id="GO:0004672">
    <property type="term" value="F:protein kinase activity"/>
    <property type="evidence" value="ECO:0000314"/>
    <property type="project" value="TAIR"/>
</dbReference>
<dbReference type="GO" id="GO:0106310">
    <property type="term" value="F:protein serine kinase activity"/>
    <property type="evidence" value="ECO:0007669"/>
    <property type="project" value="RHEA"/>
</dbReference>
<dbReference type="GO" id="GO:0004674">
    <property type="term" value="F:protein serine/threonine kinase activity"/>
    <property type="evidence" value="ECO:0000314"/>
    <property type="project" value="TAIR"/>
</dbReference>
<dbReference type="GO" id="GO:0005496">
    <property type="term" value="F:steroid binding"/>
    <property type="evidence" value="ECO:0000314"/>
    <property type="project" value="TAIR"/>
</dbReference>
<dbReference type="GO" id="GO:0004714">
    <property type="term" value="F:transmembrane receptor protein tyrosine kinase activity"/>
    <property type="evidence" value="ECO:0007669"/>
    <property type="project" value="UniProtKB-EC"/>
</dbReference>
<dbReference type="GO" id="GO:0048657">
    <property type="term" value="P:anther wall tapetum cell differentiation"/>
    <property type="evidence" value="ECO:0000315"/>
    <property type="project" value="TAIR"/>
</dbReference>
<dbReference type="GO" id="GO:0010268">
    <property type="term" value="P:brassinosteroid homeostasis"/>
    <property type="evidence" value="ECO:0000270"/>
    <property type="project" value="TAIR"/>
</dbReference>
<dbReference type="GO" id="GO:0009742">
    <property type="term" value="P:brassinosteroid mediated signaling pathway"/>
    <property type="evidence" value="ECO:0000315"/>
    <property type="project" value="TAIR"/>
</dbReference>
<dbReference type="GO" id="GO:0009729">
    <property type="term" value="P:detection of brassinosteroid stimulus"/>
    <property type="evidence" value="ECO:0000315"/>
    <property type="project" value="TAIR"/>
</dbReference>
<dbReference type="GO" id="GO:0048366">
    <property type="term" value="P:leaf development"/>
    <property type="evidence" value="ECO:0000315"/>
    <property type="project" value="TAIR"/>
</dbReference>
<dbReference type="GO" id="GO:0010584">
    <property type="term" value="P:pollen exine formation"/>
    <property type="evidence" value="ECO:0000315"/>
    <property type="project" value="TAIR"/>
</dbReference>
<dbReference type="GO" id="GO:0009911">
    <property type="term" value="P:positive regulation of flower development"/>
    <property type="evidence" value="ECO:0000316"/>
    <property type="project" value="TAIR"/>
</dbReference>
<dbReference type="GO" id="GO:0010224">
    <property type="term" value="P:response to UV-B"/>
    <property type="evidence" value="ECO:0000316"/>
    <property type="project" value="TAIR"/>
</dbReference>
<dbReference type="GO" id="GO:0090351">
    <property type="term" value="P:seedling development"/>
    <property type="evidence" value="ECO:0000315"/>
    <property type="project" value="UniProtKB"/>
</dbReference>
<dbReference type="CDD" id="cd14066">
    <property type="entry name" value="STKc_IRAK"/>
    <property type="match status" value="1"/>
</dbReference>
<dbReference type="FunFam" id="1.10.510.10:FF:000291">
    <property type="entry name" value="Brassinosteroid LRR receptor kinase"/>
    <property type="match status" value="1"/>
</dbReference>
<dbReference type="FunFam" id="3.80.10.10:FF:000125">
    <property type="entry name" value="Brassinosteroid LRR receptor kinase"/>
    <property type="match status" value="1"/>
</dbReference>
<dbReference type="FunFam" id="3.80.10.10:FF:000111">
    <property type="entry name" value="LRR receptor-like serine/threonine-protein kinase ERECTA"/>
    <property type="match status" value="1"/>
</dbReference>
<dbReference type="FunFam" id="3.30.1490.310:FF:000001">
    <property type="entry name" value="Serine/threonine-protein kinase BRI1-like 1"/>
    <property type="match status" value="1"/>
</dbReference>
<dbReference type="FunFam" id="3.30.200.20:FF:000150">
    <property type="entry name" value="serine/threonine-protein kinase BRI1-like 2"/>
    <property type="match status" value="1"/>
</dbReference>
<dbReference type="Gene3D" id="3.30.1490.310">
    <property type="match status" value="1"/>
</dbReference>
<dbReference type="Gene3D" id="3.30.200.20">
    <property type="entry name" value="Phosphorylase Kinase, domain 1"/>
    <property type="match status" value="1"/>
</dbReference>
<dbReference type="Gene3D" id="3.80.10.10">
    <property type="entry name" value="Ribonuclease Inhibitor"/>
    <property type="match status" value="1"/>
</dbReference>
<dbReference type="Gene3D" id="1.10.510.10">
    <property type="entry name" value="Transferase(Phosphotransferase) domain 1"/>
    <property type="match status" value="1"/>
</dbReference>
<dbReference type="InterPro" id="IPR045381">
    <property type="entry name" value="BRI1_island_dom"/>
</dbReference>
<dbReference type="InterPro" id="IPR011009">
    <property type="entry name" value="Kinase-like_dom_sf"/>
</dbReference>
<dbReference type="InterPro" id="IPR001611">
    <property type="entry name" value="Leu-rich_rpt"/>
</dbReference>
<dbReference type="InterPro" id="IPR003591">
    <property type="entry name" value="Leu-rich_rpt_typical-subtyp"/>
</dbReference>
<dbReference type="InterPro" id="IPR032675">
    <property type="entry name" value="LRR_dom_sf"/>
</dbReference>
<dbReference type="InterPro" id="IPR013210">
    <property type="entry name" value="LRR_N_plant-typ"/>
</dbReference>
<dbReference type="InterPro" id="IPR000719">
    <property type="entry name" value="Prot_kinase_dom"/>
</dbReference>
<dbReference type="InterPro" id="IPR017441">
    <property type="entry name" value="Protein_kinase_ATP_BS"/>
</dbReference>
<dbReference type="InterPro" id="IPR008271">
    <property type="entry name" value="Ser/Thr_kinase_AS"/>
</dbReference>
<dbReference type="PANTHER" id="PTHR27000">
    <property type="entry name" value="LEUCINE-RICH REPEAT RECEPTOR-LIKE PROTEIN KINASE FAMILY PROTEIN-RELATED"/>
    <property type="match status" value="1"/>
</dbReference>
<dbReference type="PANTHER" id="PTHR27000:SF800">
    <property type="entry name" value="OS11G0197000 PROTEIN"/>
    <property type="match status" value="1"/>
</dbReference>
<dbReference type="Pfam" id="PF20141">
    <property type="entry name" value="Island"/>
    <property type="match status" value="1"/>
</dbReference>
<dbReference type="Pfam" id="PF00560">
    <property type="entry name" value="LRR_1"/>
    <property type="match status" value="9"/>
</dbReference>
<dbReference type="Pfam" id="PF13855">
    <property type="entry name" value="LRR_8"/>
    <property type="match status" value="2"/>
</dbReference>
<dbReference type="Pfam" id="PF08263">
    <property type="entry name" value="LRRNT_2"/>
    <property type="match status" value="1"/>
</dbReference>
<dbReference type="Pfam" id="PF00069">
    <property type="entry name" value="Pkinase"/>
    <property type="match status" value="1"/>
</dbReference>
<dbReference type="PRINTS" id="PR00019">
    <property type="entry name" value="LEURICHRPT"/>
</dbReference>
<dbReference type="SMART" id="SM00369">
    <property type="entry name" value="LRR_TYP"/>
    <property type="match status" value="7"/>
</dbReference>
<dbReference type="SMART" id="SM00220">
    <property type="entry name" value="S_TKc"/>
    <property type="match status" value="1"/>
</dbReference>
<dbReference type="SUPFAM" id="SSF52058">
    <property type="entry name" value="L domain-like"/>
    <property type="match status" value="2"/>
</dbReference>
<dbReference type="SUPFAM" id="SSF56112">
    <property type="entry name" value="Protein kinase-like (PK-like)"/>
    <property type="match status" value="1"/>
</dbReference>
<dbReference type="SUPFAM" id="SSF52047">
    <property type="entry name" value="RNI-like"/>
    <property type="match status" value="1"/>
</dbReference>
<dbReference type="PROSITE" id="PS00107">
    <property type="entry name" value="PROTEIN_KINASE_ATP"/>
    <property type="match status" value="1"/>
</dbReference>
<dbReference type="PROSITE" id="PS50011">
    <property type="entry name" value="PROTEIN_KINASE_DOM"/>
    <property type="match status" value="1"/>
</dbReference>
<dbReference type="PROSITE" id="PS00108">
    <property type="entry name" value="PROTEIN_KINASE_ST"/>
    <property type="match status" value="1"/>
</dbReference>
<keyword id="KW-0002">3D-structure</keyword>
<keyword id="KW-0067">ATP-binding</keyword>
<keyword id="KW-1070">Brassinosteroid signaling pathway</keyword>
<keyword id="KW-1003">Cell membrane</keyword>
<keyword id="KW-0967">Endosome</keyword>
<keyword id="KW-0325">Glycoprotein</keyword>
<keyword id="KW-0418">Kinase</keyword>
<keyword id="KW-0433">Leucine-rich repeat</keyword>
<keyword id="KW-0446">Lipid-binding</keyword>
<keyword id="KW-0472">Membrane</keyword>
<keyword id="KW-0547">Nucleotide-binding</keyword>
<keyword id="KW-0597">Phosphoprotein</keyword>
<keyword id="KW-0675">Receptor</keyword>
<keyword id="KW-1185">Reference proteome</keyword>
<keyword id="KW-0677">Repeat</keyword>
<keyword id="KW-0723">Serine/threonine-protein kinase</keyword>
<keyword id="KW-0732">Signal</keyword>
<keyword id="KW-0754">Steroid-binding</keyword>
<keyword id="KW-0808">Transferase</keyword>
<keyword id="KW-0812">Transmembrane</keyword>
<keyword id="KW-1133">Transmembrane helix</keyword>
<keyword id="KW-0829">Tyrosine-protein kinase</keyword>
<name>BRI1_ARATH</name>
<organism>
    <name type="scientific">Arabidopsis thaliana</name>
    <name type="common">Mouse-ear cress</name>
    <dbReference type="NCBI Taxonomy" id="3702"/>
    <lineage>
        <taxon>Eukaryota</taxon>
        <taxon>Viridiplantae</taxon>
        <taxon>Streptophyta</taxon>
        <taxon>Embryophyta</taxon>
        <taxon>Tracheophyta</taxon>
        <taxon>Spermatophyta</taxon>
        <taxon>Magnoliopsida</taxon>
        <taxon>eudicotyledons</taxon>
        <taxon>Gunneridae</taxon>
        <taxon>Pentapetalae</taxon>
        <taxon>rosids</taxon>
        <taxon>malvids</taxon>
        <taxon>Brassicales</taxon>
        <taxon>Brassicaceae</taxon>
        <taxon>Camelineae</taxon>
        <taxon>Arabidopsis</taxon>
    </lineage>
</organism>